<feature type="initiator methionine" description="Removed" evidence="55">
    <location>
        <position position="1"/>
    </location>
</feature>
<feature type="chain" id="PRO_0000086460" description="Serine/threonine-protein kinase PAK 1">
    <location>
        <begin position="2"/>
        <end position="545"/>
    </location>
</feature>
<feature type="domain" description="CRIB" evidence="3">
    <location>
        <begin position="75"/>
        <end position="88"/>
    </location>
</feature>
<feature type="domain" description="Protein kinase" evidence="4">
    <location>
        <begin position="270"/>
        <end position="521"/>
    </location>
</feature>
<feature type="region of interest" description="Disordered" evidence="5">
    <location>
        <begin position="1"/>
        <end position="77"/>
    </location>
</feature>
<feature type="region of interest" description="Autoregulatory region" evidence="28">
    <location>
        <begin position="70"/>
        <end position="140"/>
    </location>
</feature>
<feature type="region of interest" description="GTPase-binding" evidence="28">
    <location>
        <begin position="75"/>
        <end position="105"/>
    </location>
</feature>
<feature type="region of interest" description="Disordered" evidence="5">
    <location>
        <begin position="159"/>
        <end position="198"/>
    </location>
</feature>
<feature type="region of interest" description="Disordered" evidence="5">
    <location>
        <begin position="211"/>
        <end position="251"/>
    </location>
</feature>
<feature type="compositionally biased region" description="Basic and acidic residues" evidence="5">
    <location>
        <begin position="68"/>
        <end position="77"/>
    </location>
</feature>
<feature type="compositionally biased region" description="Acidic residues" evidence="5">
    <location>
        <begin position="174"/>
        <end position="184"/>
    </location>
</feature>
<feature type="compositionally biased region" description="Polar residues" evidence="5">
    <location>
        <begin position="220"/>
        <end position="231"/>
    </location>
</feature>
<feature type="active site" description="Proton acceptor" evidence="28">
    <location>
        <position position="389"/>
    </location>
</feature>
<feature type="binding site" evidence="28">
    <location>
        <begin position="276"/>
        <end position="284"/>
    </location>
    <ligand>
        <name>ATP</name>
        <dbReference type="ChEBI" id="CHEBI:30616"/>
    </ligand>
</feature>
<feature type="binding site" evidence="28">
    <location>
        <position position="299"/>
    </location>
    <ligand>
        <name>ATP</name>
        <dbReference type="ChEBI" id="CHEBI:30616"/>
    </ligand>
</feature>
<feature type="binding site" evidence="28">
    <location>
        <begin position="345"/>
        <end position="347"/>
    </location>
    <ligand>
        <name>ATP</name>
        <dbReference type="ChEBI" id="CHEBI:30616"/>
    </ligand>
</feature>
<feature type="modified residue" description="N-acetylserine" evidence="55">
    <location>
        <position position="2"/>
    </location>
</feature>
<feature type="modified residue" description="Phosphoserine; by PKB and autocatalysis" evidence="14 24">
    <location>
        <position position="21"/>
    </location>
</feature>
<feature type="modified residue" description="Phosphoserine; by autocatalysis" evidence="24">
    <location>
        <position position="57"/>
    </location>
</feature>
<feature type="modified residue" description="Phosphothreonine; by OXSR1" evidence="2">
    <location>
        <position position="84"/>
    </location>
</feature>
<feature type="modified residue" description="Phosphoserine" evidence="57">
    <location>
        <position position="115"/>
    </location>
</feature>
<feature type="modified residue" description="Phosphotyrosine" evidence="24">
    <location>
        <position position="131"/>
    </location>
</feature>
<feature type="modified residue" description="Phosphotyrosine" evidence="24">
    <location>
        <position position="142"/>
    </location>
</feature>
<feature type="modified residue" description="Phosphoserine; by autocatalysis" evidence="27 54">
    <location>
        <position position="144"/>
    </location>
</feature>
<feature type="modified residue" description="Phosphoserine" evidence="54">
    <location>
        <position position="149"/>
    </location>
</feature>
<feature type="modified residue" description="Phosphotyrosine; by JAK2" evidence="23 24">
    <location>
        <position position="153"/>
    </location>
</feature>
<feature type="modified residue" description="Phosphoserine" evidence="24 54">
    <location>
        <position position="174"/>
    </location>
</feature>
<feature type="modified residue" description="Phosphothreonine" evidence="24">
    <location>
        <position position="185"/>
    </location>
</feature>
<feature type="modified residue" description="Phosphoserine; by autocatalysis" evidence="27">
    <location>
        <position position="199"/>
    </location>
</feature>
<feature type="modified residue" description="Phosphotyrosine; by JAK2" evidence="23">
    <location>
        <position position="201"/>
    </location>
</feature>
<feature type="modified residue" description="Phosphoserine" evidence="53">
    <location>
        <position position="204"/>
    </location>
</feature>
<feature type="modified residue" description="Phosphothreonine" evidence="24 30 51 53">
    <location>
        <position position="212"/>
    </location>
</feature>
<feature type="modified residue" description="Phosphothreonine" evidence="53">
    <location>
        <position position="219"/>
    </location>
</feature>
<feature type="modified residue" description="Phosphoserine" evidence="53">
    <location>
        <position position="220"/>
    </location>
</feature>
<feature type="modified residue" description="Phosphoserine" evidence="54">
    <location>
        <position position="223"/>
    </location>
</feature>
<feature type="modified residue" description="Phosphothreonine" evidence="1">
    <location>
        <position position="225"/>
    </location>
</feature>
<feature type="modified residue" description="Phosphothreonine" evidence="1">
    <location>
        <position position="229"/>
    </location>
</feature>
<feature type="modified residue" description="Phosphothreonine" evidence="52 53 54 56">
    <location>
        <position position="230"/>
    </location>
</feature>
<feature type="modified residue" description="Phosphotyrosine; by JAK2" evidence="23 24">
    <location>
        <position position="285"/>
    </location>
</feature>
<feature type="modified residue" description="Phosphothreonine; by autocatalysis, BRSK2 and PDPK1" evidence="7 8 28 29">
    <location>
        <position position="423"/>
    </location>
</feature>
<feature type="splice variant" id="VSP_017507" description="In isoform 2." evidence="46">
    <original>HQFLKIAKPLSSLTPLIAAAKEATKNNH</original>
    <variation>VRKLRFQVFSNFSMIAASIPEDCQAPLQPHSTDCCS</variation>
    <location>
        <begin position="518"/>
        <end position="545"/>
    </location>
</feature>
<feature type="sequence variant" id="VAR_081554" description="In IDDMSSD; gain of function; enhanced PAK1 kinase activity and significantly reduced homodimerization; dbSNP:rs1565638316." evidence="37">
    <original>Y</original>
    <variation>C</variation>
    <location>
        <position position="131"/>
    </location>
</feature>
<feature type="sequence variant" id="VAR_081555" description="In IDDMSSD; gain-of-function; enhanced PAK1 kinase activity and significantly reduced homodimerization; dbSNP:rs1565583382." evidence="37">
    <original>Y</original>
    <variation>C</variation>
    <location>
        <position position="429"/>
    </location>
</feature>
<feature type="sequence variant" id="VAR_051654" description="In dbSNP:rs35345144.">
    <original>L</original>
    <variation>V</variation>
    <location>
        <position position="515"/>
    </location>
</feature>
<feature type="mutagenesis site" description="Abolishes interaction with CDC42, leading to strongly decreased activity; when associated with L-86." evidence="7 42">
    <original>H</original>
    <variation>L</variation>
    <location>
        <position position="83"/>
    </location>
</feature>
<feature type="mutagenesis site" description="Abolishes interaction with CDC42, leading to strongly decreased activity; when associated with L-83." evidence="7 42">
    <original>H</original>
    <variation>L</variation>
    <location>
        <position position="86"/>
    </location>
</feature>
<feature type="mutagenesis site" description="Abolishes autoinhibition, leading to constitutive kinase activity." evidence="7">
    <original>L</original>
    <variation>F</variation>
    <location>
        <position position="107"/>
    </location>
</feature>
<feature type="mutagenesis site" description="Strongly decreases activity. Abolishes kinase activity; when associated with N-389." evidence="28">
    <original>K</original>
    <variation>R</variation>
    <location>
        <position position="299"/>
    </location>
</feature>
<feature type="mutagenesis site" description="Abolishes kinase activity; when associated with R-299." evidence="28">
    <original>D</original>
    <variation>N</variation>
    <location>
        <position position="389"/>
    </location>
</feature>
<feature type="mutagenesis site" description="Abolishes autophosphorylation at Thr-423." evidence="28">
    <original>D</original>
    <variation>A</variation>
    <location>
        <position position="393"/>
    </location>
</feature>
<feature type="mutagenesis site" description="Decreases CDC42-stimulated activity and autophosphorylation." evidence="7">
    <original>T</original>
    <variation>A</variation>
    <location>
        <position position="423"/>
    </location>
</feature>
<feature type="mutagenesis site" description="Constitutive kinase activity." evidence="7">
    <original>T</original>
    <variation>E</variation>
    <location>
        <position position="423"/>
    </location>
</feature>
<feature type="sequence conflict" description="In Ref. 2; AAA65441 and 3; AAC24716." evidence="47" ref="2 3">
    <original>A</original>
    <variation>V</variation>
    <location>
        <position position="26"/>
    </location>
</feature>
<feature type="sequence conflict" description="In Ref. 1; AAC50590." evidence="47" ref="1">
    <original>R</original>
    <variation>L</variation>
    <location>
        <position position="237"/>
    </location>
</feature>
<feature type="sequence conflict" description="In Ref. 1; AAC50590." evidence="47" ref="1">
    <original>F</original>
    <variation>S</variation>
    <location>
        <position position="379"/>
    </location>
</feature>
<feature type="sequence conflict" description="In Ref. 2; AAA65441." evidence="47" ref="2">
    <original>E</original>
    <variation>D</variation>
    <location>
        <position position="503"/>
    </location>
</feature>
<feature type="strand" evidence="60">
    <location>
        <begin position="79"/>
        <end position="87"/>
    </location>
</feature>
<feature type="turn" evidence="60">
    <location>
        <begin position="91"/>
        <end position="94"/>
    </location>
</feature>
<feature type="strand" evidence="58">
    <location>
        <begin position="95"/>
        <end position="98"/>
    </location>
</feature>
<feature type="helix" evidence="58">
    <location>
        <begin position="101"/>
        <end position="108"/>
    </location>
</feature>
<feature type="helix" evidence="58">
    <location>
        <begin position="114"/>
        <end position="119"/>
    </location>
</feature>
<feature type="helix" evidence="58">
    <location>
        <begin position="121"/>
        <end position="135"/>
    </location>
</feature>
<feature type="strand" evidence="59">
    <location>
        <begin position="195"/>
        <end position="198"/>
    </location>
</feature>
<feature type="strand" evidence="61">
    <location>
        <begin position="214"/>
        <end position="219"/>
    </location>
</feature>
<feature type="helix" evidence="62">
    <location>
        <begin position="250"/>
        <end position="260"/>
    </location>
</feature>
<feature type="strand" evidence="62">
    <location>
        <begin position="261"/>
        <end position="264"/>
    </location>
</feature>
<feature type="helix" evidence="62">
    <location>
        <begin position="266"/>
        <end position="268"/>
    </location>
</feature>
<feature type="strand" evidence="63">
    <location>
        <begin position="270"/>
        <end position="272"/>
    </location>
</feature>
<feature type="strand" evidence="62">
    <location>
        <begin position="274"/>
        <end position="279"/>
    </location>
</feature>
<feature type="strand" evidence="62">
    <location>
        <begin position="282"/>
        <end position="289"/>
    </location>
</feature>
<feature type="turn" evidence="62">
    <location>
        <begin position="290"/>
        <end position="292"/>
    </location>
</feature>
<feature type="strand" evidence="62">
    <location>
        <begin position="295"/>
        <end position="302"/>
    </location>
</feature>
<feature type="helix" evidence="62">
    <location>
        <begin position="303"/>
        <end position="305"/>
    </location>
</feature>
<feature type="helix" evidence="62">
    <location>
        <begin position="309"/>
        <end position="321"/>
    </location>
</feature>
<feature type="strand" evidence="62">
    <location>
        <begin position="330"/>
        <end position="336"/>
    </location>
</feature>
<feature type="strand" evidence="62">
    <location>
        <begin position="339"/>
        <end position="345"/>
    </location>
</feature>
<feature type="strand" evidence="64">
    <location>
        <begin position="349"/>
        <end position="351"/>
    </location>
</feature>
<feature type="helix" evidence="62">
    <location>
        <begin position="352"/>
        <end position="358"/>
    </location>
</feature>
<feature type="helix" evidence="62">
    <location>
        <begin position="363"/>
        <end position="382"/>
    </location>
</feature>
<feature type="helix" evidence="62">
    <location>
        <begin position="392"/>
        <end position="394"/>
    </location>
</feature>
<feature type="strand" evidence="62">
    <location>
        <begin position="395"/>
        <end position="397"/>
    </location>
</feature>
<feature type="strand" evidence="62">
    <location>
        <begin position="403"/>
        <end position="405"/>
    </location>
</feature>
<feature type="strand" evidence="58">
    <location>
        <begin position="408"/>
        <end position="410"/>
    </location>
</feature>
<feature type="strand" evidence="65">
    <location>
        <begin position="416"/>
        <end position="418"/>
    </location>
</feature>
<feature type="helix" evidence="62">
    <location>
        <begin position="428"/>
        <end position="430"/>
    </location>
</feature>
<feature type="helix" evidence="62">
    <location>
        <begin position="433"/>
        <end position="437"/>
    </location>
</feature>
<feature type="helix" evidence="62">
    <location>
        <begin position="444"/>
        <end position="459"/>
    </location>
</feature>
<feature type="turn" evidence="62">
    <location>
        <begin position="463"/>
        <end position="466"/>
    </location>
</feature>
<feature type="helix" evidence="62">
    <location>
        <begin position="469"/>
        <end position="479"/>
    </location>
</feature>
<feature type="helix" evidence="62">
    <location>
        <begin position="487"/>
        <end position="489"/>
    </location>
</feature>
<feature type="helix" evidence="62">
    <location>
        <begin position="492"/>
        <end position="501"/>
    </location>
</feature>
<feature type="turn" evidence="62">
    <location>
        <begin position="506"/>
        <end position="508"/>
    </location>
</feature>
<feature type="helix" evidence="62">
    <location>
        <begin position="512"/>
        <end position="515"/>
    </location>
</feature>
<feature type="helix" evidence="62">
    <location>
        <begin position="519"/>
        <end position="523"/>
    </location>
</feature>
<feature type="helix" evidence="62">
    <location>
        <begin position="527"/>
        <end position="530"/>
    </location>
</feature>
<feature type="helix" evidence="62">
    <location>
        <begin position="531"/>
        <end position="540"/>
    </location>
</feature>
<accession>Q13153</accession>
<accession>O75561</accession>
<accession>Q13567</accession>
<accession>Q32M53</accession>
<accession>Q32M54</accession>
<accession>Q86W79</accession>
<evidence type="ECO:0000250" key="1">
    <source>
        <dbReference type="UniProtKB" id="O88643"/>
    </source>
</evidence>
<evidence type="ECO:0000250" key="2">
    <source>
        <dbReference type="UniProtKB" id="P35465"/>
    </source>
</evidence>
<evidence type="ECO:0000255" key="3">
    <source>
        <dbReference type="PROSITE-ProRule" id="PRU00057"/>
    </source>
</evidence>
<evidence type="ECO:0000255" key="4">
    <source>
        <dbReference type="PROSITE-ProRule" id="PRU00159"/>
    </source>
</evidence>
<evidence type="ECO:0000256" key="5">
    <source>
        <dbReference type="SAM" id="MobiDB-lite"/>
    </source>
</evidence>
<evidence type="ECO:0000269" key="6">
    <source>
    </source>
</evidence>
<evidence type="ECO:0000269" key="7">
    <source>
    </source>
</evidence>
<evidence type="ECO:0000269" key="8">
    <source>
    </source>
</evidence>
<evidence type="ECO:0000269" key="9">
    <source>
    </source>
</evidence>
<evidence type="ECO:0000269" key="10">
    <source>
    </source>
</evidence>
<evidence type="ECO:0000269" key="11">
    <source>
    </source>
</evidence>
<evidence type="ECO:0000269" key="12">
    <source>
    </source>
</evidence>
<evidence type="ECO:0000269" key="13">
    <source>
    </source>
</evidence>
<evidence type="ECO:0000269" key="14">
    <source>
    </source>
</evidence>
<evidence type="ECO:0000269" key="15">
    <source>
    </source>
</evidence>
<evidence type="ECO:0000269" key="16">
    <source>
    </source>
</evidence>
<evidence type="ECO:0000269" key="17">
    <source>
    </source>
</evidence>
<evidence type="ECO:0000269" key="18">
    <source>
    </source>
</evidence>
<evidence type="ECO:0000269" key="19">
    <source>
    </source>
</evidence>
<evidence type="ECO:0000269" key="20">
    <source>
    </source>
</evidence>
<evidence type="ECO:0000269" key="21">
    <source>
    </source>
</evidence>
<evidence type="ECO:0000269" key="22">
    <source>
    </source>
</evidence>
<evidence type="ECO:0000269" key="23">
    <source>
    </source>
</evidence>
<evidence type="ECO:0000269" key="24">
    <source>
    </source>
</evidence>
<evidence type="ECO:0000269" key="25">
    <source>
    </source>
</evidence>
<evidence type="ECO:0000269" key="26">
    <source>
    </source>
</evidence>
<evidence type="ECO:0000269" key="27">
    <source>
    </source>
</evidence>
<evidence type="ECO:0000269" key="28">
    <source>
    </source>
</evidence>
<evidence type="ECO:0000269" key="29">
    <source>
    </source>
</evidence>
<evidence type="ECO:0000269" key="30">
    <source>
    </source>
</evidence>
<evidence type="ECO:0000269" key="31">
    <source>
    </source>
</evidence>
<evidence type="ECO:0000269" key="32">
    <source>
    </source>
</evidence>
<evidence type="ECO:0000269" key="33">
    <source>
    </source>
</evidence>
<evidence type="ECO:0000269" key="34">
    <source>
    </source>
</evidence>
<evidence type="ECO:0000269" key="35">
    <source>
    </source>
</evidence>
<evidence type="ECO:0000269" key="36">
    <source>
    </source>
</evidence>
<evidence type="ECO:0000269" key="37">
    <source>
    </source>
</evidence>
<evidence type="ECO:0000269" key="38">
    <source>
    </source>
</evidence>
<evidence type="ECO:0000269" key="39">
    <source>
    </source>
</evidence>
<evidence type="ECO:0000269" key="40">
    <source>
    </source>
</evidence>
<evidence type="ECO:0000269" key="41">
    <source>
    </source>
</evidence>
<evidence type="ECO:0000269" key="42">
    <source>
    </source>
</evidence>
<evidence type="ECO:0000303" key="43">
    <source>
    </source>
</evidence>
<evidence type="ECO:0000303" key="44">
    <source>
    </source>
</evidence>
<evidence type="ECO:0000303" key="45">
    <source>
    </source>
</evidence>
<evidence type="ECO:0000303" key="46">
    <source ref="3"/>
</evidence>
<evidence type="ECO:0000305" key="47"/>
<evidence type="ECO:0000305" key="48">
    <source>
    </source>
</evidence>
<evidence type="ECO:0000305" key="49">
    <source>
    </source>
</evidence>
<evidence type="ECO:0000312" key="50">
    <source>
        <dbReference type="HGNC" id="HGNC:8590"/>
    </source>
</evidence>
<evidence type="ECO:0007744" key="51">
    <source>
    </source>
</evidence>
<evidence type="ECO:0007744" key="52">
    <source>
    </source>
</evidence>
<evidence type="ECO:0007744" key="53">
    <source>
    </source>
</evidence>
<evidence type="ECO:0007744" key="54">
    <source>
    </source>
</evidence>
<evidence type="ECO:0007744" key="55">
    <source>
    </source>
</evidence>
<evidence type="ECO:0007744" key="56">
    <source>
    </source>
</evidence>
<evidence type="ECO:0007744" key="57">
    <source>
    </source>
</evidence>
<evidence type="ECO:0007829" key="58">
    <source>
        <dbReference type="PDB" id="1F3M"/>
    </source>
</evidence>
<evidence type="ECO:0007829" key="59">
    <source>
        <dbReference type="PDB" id="1ZSG"/>
    </source>
</evidence>
<evidence type="ECO:0007829" key="60">
    <source>
        <dbReference type="PDB" id="2QME"/>
    </source>
</evidence>
<evidence type="ECO:0007829" key="61">
    <source>
        <dbReference type="PDB" id="3DVP"/>
    </source>
</evidence>
<evidence type="ECO:0007829" key="62">
    <source>
        <dbReference type="PDB" id="3FXZ"/>
    </source>
</evidence>
<evidence type="ECO:0007829" key="63">
    <source>
        <dbReference type="PDB" id="3Q4Z"/>
    </source>
</evidence>
<evidence type="ECO:0007829" key="64">
    <source>
        <dbReference type="PDB" id="4ZJI"/>
    </source>
</evidence>
<evidence type="ECO:0007829" key="65">
    <source>
        <dbReference type="PDB" id="8X5Z"/>
    </source>
</evidence>
<name>PAK1_HUMAN</name>
<keyword id="KW-0002">3D-structure</keyword>
<keyword id="KW-0007">Acetylation</keyword>
<keyword id="KW-0021">Allosteric enzyme</keyword>
<keyword id="KW-0025">Alternative splicing</keyword>
<keyword id="KW-0053">Apoptosis</keyword>
<keyword id="KW-0067">ATP-binding</keyword>
<keyword id="KW-0965">Cell junction</keyword>
<keyword id="KW-1003">Cell membrane</keyword>
<keyword id="KW-0966">Cell projection</keyword>
<keyword id="KW-0158">Chromosome</keyword>
<keyword id="KW-0963">Cytoplasm</keyword>
<keyword id="KW-0206">Cytoskeleton</keyword>
<keyword id="KW-0225">Disease variant</keyword>
<keyword id="KW-0887">Epilepsy</keyword>
<keyword id="KW-0268">Exocytosis</keyword>
<keyword id="KW-0991">Intellectual disability</keyword>
<keyword id="KW-0418">Kinase</keyword>
<keyword id="KW-0472">Membrane</keyword>
<keyword id="KW-0547">Nucleotide-binding</keyword>
<keyword id="KW-0539">Nucleus</keyword>
<keyword id="KW-0597">Phosphoprotein</keyword>
<keyword id="KW-1267">Proteomics identification</keyword>
<keyword id="KW-1185">Reference proteome</keyword>
<keyword id="KW-0723">Serine/threonine-protein kinase</keyword>
<keyword id="KW-0808">Transferase</keyword>
<organism>
    <name type="scientific">Homo sapiens</name>
    <name type="common">Human</name>
    <dbReference type="NCBI Taxonomy" id="9606"/>
    <lineage>
        <taxon>Eukaryota</taxon>
        <taxon>Metazoa</taxon>
        <taxon>Chordata</taxon>
        <taxon>Craniata</taxon>
        <taxon>Vertebrata</taxon>
        <taxon>Euteleostomi</taxon>
        <taxon>Mammalia</taxon>
        <taxon>Eutheria</taxon>
        <taxon>Euarchontoglires</taxon>
        <taxon>Primates</taxon>
        <taxon>Haplorrhini</taxon>
        <taxon>Catarrhini</taxon>
        <taxon>Hominidae</taxon>
        <taxon>Homo</taxon>
    </lineage>
</organism>
<proteinExistence type="evidence at protein level"/>
<dbReference type="EC" id="2.7.11.1" evidence="7 22 28 39"/>
<dbReference type="EMBL" id="U51120">
    <property type="protein sequence ID" value="AAC50590.1"/>
    <property type="molecule type" value="mRNA"/>
</dbReference>
<dbReference type="EMBL" id="U24152">
    <property type="protein sequence ID" value="AAA65441.1"/>
    <property type="molecule type" value="mRNA"/>
</dbReference>
<dbReference type="EMBL" id="AF071884">
    <property type="protein sequence ID" value="AAC24716.1"/>
    <property type="molecule type" value="mRNA"/>
</dbReference>
<dbReference type="EMBL" id="AP000486">
    <property type="status" value="NOT_ANNOTATED_CDS"/>
    <property type="molecule type" value="Genomic_DNA"/>
</dbReference>
<dbReference type="EMBL" id="AP003680">
    <property type="status" value="NOT_ANNOTATED_CDS"/>
    <property type="molecule type" value="Genomic_DNA"/>
</dbReference>
<dbReference type="EMBL" id="BC109299">
    <property type="protein sequence ID" value="AAI09300.1"/>
    <property type="molecule type" value="mRNA"/>
</dbReference>
<dbReference type="CCDS" id="CCDS44687.1">
    <molecule id="Q13153-2"/>
</dbReference>
<dbReference type="CCDS" id="CCDS8250.1">
    <molecule id="Q13153-1"/>
</dbReference>
<dbReference type="PIR" id="G01773">
    <property type="entry name" value="G01773"/>
</dbReference>
<dbReference type="RefSeq" id="NP_001122092.1">
    <molecule id="Q13153-2"/>
    <property type="nucleotide sequence ID" value="NM_001128620.2"/>
</dbReference>
<dbReference type="RefSeq" id="NP_001363197.1">
    <molecule id="Q13153-2"/>
    <property type="nucleotide sequence ID" value="NM_001376268.1"/>
</dbReference>
<dbReference type="RefSeq" id="NP_001363198.1">
    <molecule id="Q13153-2"/>
    <property type="nucleotide sequence ID" value="NM_001376269.1"/>
</dbReference>
<dbReference type="RefSeq" id="NP_001363199.1">
    <molecule id="Q13153-2"/>
    <property type="nucleotide sequence ID" value="NM_001376270.1"/>
</dbReference>
<dbReference type="RefSeq" id="NP_001363200.1">
    <molecule id="Q13153-2"/>
    <property type="nucleotide sequence ID" value="NM_001376271.1"/>
</dbReference>
<dbReference type="RefSeq" id="NP_001363202.1">
    <molecule id="Q13153-1"/>
    <property type="nucleotide sequence ID" value="NM_001376273.1"/>
</dbReference>
<dbReference type="RefSeq" id="NP_001363203.1">
    <molecule id="Q13153-1"/>
    <property type="nucleotide sequence ID" value="NM_001376274.1"/>
</dbReference>
<dbReference type="RefSeq" id="NP_001363204.1">
    <molecule id="Q13153-1"/>
    <property type="nucleotide sequence ID" value="NM_001376275.1"/>
</dbReference>
<dbReference type="RefSeq" id="NP_001363205.1">
    <molecule id="Q13153-1"/>
    <property type="nucleotide sequence ID" value="NM_001376276.1"/>
</dbReference>
<dbReference type="RefSeq" id="NP_001363206.1">
    <molecule id="Q13153-1"/>
    <property type="nucleotide sequence ID" value="NM_001376277.1"/>
</dbReference>
<dbReference type="RefSeq" id="NP_001363207.1">
    <molecule id="Q13153-1"/>
    <property type="nucleotide sequence ID" value="NM_001376278.1"/>
</dbReference>
<dbReference type="RefSeq" id="NP_001363208.1">
    <molecule id="Q13153-1"/>
    <property type="nucleotide sequence ID" value="NM_001376279.1"/>
</dbReference>
<dbReference type="RefSeq" id="NP_001363209.1">
    <molecule id="Q13153-1"/>
    <property type="nucleotide sequence ID" value="NM_001376280.1"/>
</dbReference>
<dbReference type="RefSeq" id="NP_001363210.1">
    <molecule id="Q13153-1"/>
    <property type="nucleotide sequence ID" value="NM_001376281.1"/>
</dbReference>
<dbReference type="RefSeq" id="NP_001363211.1">
    <molecule id="Q13153-1"/>
    <property type="nucleotide sequence ID" value="NM_001376282.1"/>
</dbReference>
<dbReference type="RefSeq" id="NP_001363212.1">
    <molecule id="Q13153-1"/>
    <property type="nucleotide sequence ID" value="NM_001376283.1"/>
</dbReference>
<dbReference type="RefSeq" id="NP_001363213.1">
    <molecule id="Q13153-1"/>
    <property type="nucleotide sequence ID" value="NM_001376284.1"/>
</dbReference>
<dbReference type="RefSeq" id="NP_001363214.1">
    <molecule id="Q13153-1"/>
    <property type="nucleotide sequence ID" value="NM_001376285.1"/>
</dbReference>
<dbReference type="RefSeq" id="NP_001363215.1">
    <molecule id="Q13153-1"/>
    <property type="nucleotide sequence ID" value="NM_001376286.1"/>
</dbReference>
<dbReference type="RefSeq" id="NP_001363216.1">
    <molecule id="Q13153-1"/>
    <property type="nucleotide sequence ID" value="NM_001376287.1"/>
</dbReference>
<dbReference type="RefSeq" id="NP_002567.3">
    <molecule id="Q13153-1"/>
    <property type="nucleotide sequence ID" value="NM_002576.4"/>
</dbReference>
<dbReference type="RefSeq" id="XP_011543382.1">
    <property type="nucleotide sequence ID" value="XM_011545080.2"/>
</dbReference>
<dbReference type="RefSeq" id="XP_011543383.1">
    <property type="nucleotide sequence ID" value="XM_011545081.2"/>
</dbReference>
<dbReference type="RefSeq" id="XP_011543384.1">
    <property type="nucleotide sequence ID" value="XM_011545082.2"/>
</dbReference>
<dbReference type="RefSeq" id="XP_011543385.1">
    <property type="nucleotide sequence ID" value="XM_011545083.2"/>
</dbReference>
<dbReference type="RefSeq" id="XP_011543386.1">
    <property type="nucleotide sequence ID" value="XM_011545084.2"/>
</dbReference>
<dbReference type="RefSeq" id="XP_016873335.1">
    <property type="nucleotide sequence ID" value="XM_017017846.1"/>
</dbReference>
<dbReference type="RefSeq" id="XP_016873336.1">
    <property type="nucleotide sequence ID" value="XM_017017847.1"/>
</dbReference>
<dbReference type="RefSeq" id="XP_016873337.1">
    <property type="nucleotide sequence ID" value="XM_017017848.1"/>
</dbReference>
<dbReference type="RefSeq" id="XP_016873338.1">
    <property type="nucleotide sequence ID" value="XM_017017849.1"/>
</dbReference>
<dbReference type="RefSeq" id="XP_016873339.1">
    <property type="nucleotide sequence ID" value="XM_017017850.1"/>
</dbReference>
<dbReference type="RefSeq" id="XP_024304325.1">
    <molecule id="Q13153-2"/>
    <property type="nucleotide sequence ID" value="XM_024448557.2"/>
</dbReference>
<dbReference type="RefSeq" id="XP_024304326.1">
    <molecule id="Q13153-2"/>
    <property type="nucleotide sequence ID" value="XM_024448558.2"/>
</dbReference>
<dbReference type="RefSeq" id="XP_024304327.1">
    <molecule id="Q13153-2"/>
    <property type="nucleotide sequence ID" value="XM_024448559.2"/>
</dbReference>
<dbReference type="RefSeq" id="XP_024304328.1">
    <molecule id="Q13153-1"/>
    <property type="nucleotide sequence ID" value="XM_024448560.2"/>
</dbReference>
<dbReference type="RefSeq" id="XP_047283004.1">
    <molecule id="Q13153-2"/>
    <property type="nucleotide sequence ID" value="XM_047427048.1"/>
</dbReference>
<dbReference type="RefSeq" id="XP_047283005.1">
    <molecule id="Q13153-2"/>
    <property type="nucleotide sequence ID" value="XM_047427049.1"/>
</dbReference>
<dbReference type="RefSeq" id="XP_047283006.1">
    <molecule id="Q13153-2"/>
    <property type="nucleotide sequence ID" value="XM_047427050.1"/>
</dbReference>
<dbReference type="RefSeq" id="XP_047283007.1">
    <molecule id="Q13153-2"/>
    <property type="nucleotide sequence ID" value="XM_047427051.1"/>
</dbReference>
<dbReference type="RefSeq" id="XP_047283008.1">
    <molecule id="Q13153-2"/>
    <property type="nucleotide sequence ID" value="XM_047427052.1"/>
</dbReference>
<dbReference type="RefSeq" id="XP_047283009.1">
    <molecule id="Q13153-1"/>
    <property type="nucleotide sequence ID" value="XM_047427053.1"/>
</dbReference>
<dbReference type="RefSeq" id="XP_047283010.1">
    <molecule id="Q13153-1"/>
    <property type="nucleotide sequence ID" value="XM_047427054.1"/>
</dbReference>
<dbReference type="RefSeq" id="XP_054224986.1">
    <molecule id="Q13153-2"/>
    <property type="nucleotide sequence ID" value="XM_054369011.1"/>
</dbReference>
<dbReference type="RefSeq" id="XP_054224987.1">
    <molecule id="Q13153-2"/>
    <property type="nucleotide sequence ID" value="XM_054369012.1"/>
</dbReference>
<dbReference type="RefSeq" id="XP_054224988.1">
    <molecule id="Q13153-2"/>
    <property type="nucleotide sequence ID" value="XM_054369013.1"/>
</dbReference>
<dbReference type="RefSeq" id="XP_054224989.1">
    <molecule id="Q13153-2"/>
    <property type="nucleotide sequence ID" value="XM_054369014.1"/>
</dbReference>
<dbReference type="RefSeq" id="XP_054224990.1">
    <molecule id="Q13153-2"/>
    <property type="nucleotide sequence ID" value="XM_054369015.1"/>
</dbReference>
<dbReference type="RefSeq" id="XP_054224991.1">
    <molecule id="Q13153-2"/>
    <property type="nucleotide sequence ID" value="XM_054369016.1"/>
</dbReference>
<dbReference type="RefSeq" id="XP_054224992.1">
    <molecule id="Q13153-2"/>
    <property type="nucleotide sequence ID" value="XM_054369017.1"/>
</dbReference>
<dbReference type="RefSeq" id="XP_054224993.1">
    <molecule id="Q13153-2"/>
    <property type="nucleotide sequence ID" value="XM_054369018.1"/>
</dbReference>
<dbReference type="RefSeq" id="XP_054224994.1">
    <molecule id="Q13153-1"/>
    <property type="nucleotide sequence ID" value="XM_054369019.1"/>
</dbReference>
<dbReference type="RefSeq" id="XP_054224995.1">
    <molecule id="Q13153-1"/>
    <property type="nucleotide sequence ID" value="XM_054369020.1"/>
</dbReference>
<dbReference type="RefSeq" id="XP_054224996.1">
    <molecule id="Q13153-1"/>
    <property type="nucleotide sequence ID" value="XM_054369021.1"/>
</dbReference>
<dbReference type="PDB" id="1F3M">
    <property type="method" value="X-ray"/>
    <property type="resolution" value="2.30 A"/>
    <property type="chains" value="A/B=70-149, C/D=249-545"/>
</dbReference>
<dbReference type="PDB" id="1YHV">
    <property type="method" value="X-ray"/>
    <property type="resolution" value="1.80 A"/>
    <property type="chains" value="A=249-545"/>
</dbReference>
<dbReference type="PDB" id="1YHW">
    <property type="method" value="X-ray"/>
    <property type="resolution" value="1.80 A"/>
    <property type="chains" value="A=249-545"/>
</dbReference>
<dbReference type="PDB" id="1ZSG">
    <property type="method" value="NMR"/>
    <property type="chains" value="B=183-204"/>
</dbReference>
<dbReference type="PDB" id="2HY8">
    <property type="method" value="X-ray"/>
    <property type="resolution" value="2.00 A"/>
    <property type="chains" value="1=249-545"/>
</dbReference>
<dbReference type="PDB" id="2QME">
    <property type="method" value="X-ray"/>
    <property type="resolution" value="1.75 A"/>
    <property type="chains" value="I=74-109"/>
</dbReference>
<dbReference type="PDB" id="3DVP">
    <property type="method" value="X-ray"/>
    <property type="resolution" value="2.50 A"/>
    <property type="chains" value="C/D=212-221"/>
</dbReference>
<dbReference type="PDB" id="3FXZ">
    <property type="method" value="X-ray"/>
    <property type="resolution" value="1.64 A"/>
    <property type="chains" value="A=249-545"/>
</dbReference>
<dbReference type="PDB" id="3FY0">
    <property type="method" value="X-ray"/>
    <property type="resolution" value="2.35 A"/>
    <property type="chains" value="A=249-545"/>
</dbReference>
<dbReference type="PDB" id="3Q4Z">
    <property type="method" value="X-ray"/>
    <property type="resolution" value="1.89 A"/>
    <property type="chains" value="A/B=248-545"/>
</dbReference>
<dbReference type="PDB" id="3Q52">
    <property type="method" value="X-ray"/>
    <property type="resolution" value="1.80 A"/>
    <property type="chains" value="A=248-545"/>
</dbReference>
<dbReference type="PDB" id="3Q53">
    <property type="method" value="X-ray"/>
    <property type="resolution" value="2.09 A"/>
    <property type="chains" value="A=248-545"/>
</dbReference>
<dbReference type="PDB" id="4DAW">
    <property type="method" value="X-ray"/>
    <property type="resolution" value="2.00 A"/>
    <property type="chains" value="A=249-545"/>
</dbReference>
<dbReference type="PDB" id="4EQC">
    <property type="method" value="X-ray"/>
    <property type="resolution" value="2.01 A"/>
    <property type="chains" value="A=249-545"/>
</dbReference>
<dbReference type="PDB" id="4O0R">
    <property type="method" value="X-ray"/>
    <property type="resolution" value="2.40 A"/>
    <property type="chains" value="A/B=249-545"/>
</dbReference>
<dbReference type="PDB" id="4O0T">
    <property type="method" value="X-ray"/>
    <property type="resolution" value="2.60 A"/>
    <property type="chains" value="A/B=249-545"/>
</dbReference>
<dbReference type="PDB" id="4P90">
    <property type="method" value="X-ray"/>
    <property type="resolution" value="2.49 A"/>
    <property type="chains" value="A/B=249-545"/>
</dbReference>
<dbReference type="PDB" id="4ZJI">
    <property type="method" value="X-ray"/>
    <property type="resolution" value="1.99 A"/>
    <property type="chains" value="A/B/C/D=249-545"/>
</dbReference>
<dbReference type="PDB" id="4ZJJ">
    <property type="method" value="X-ray"/>
    <property type="resolution" value="2.20 A"/>
    <property type="chains" value="A/B/C/D=249-545"/>
</dbReference>
<dbReference type="PDB" id="4ZLO">
    <property type="method" value="X-ray"/>
    <property type="resolution" value="2.50 A"/>
    <property type="chains" value="A/B=249-545"/>
</dbReference>
<dbReference type="PDB" id="4ZY4">
    <property type="method" value="X-ray"/>
    <property type="resolution" value="2.60 A"/>
    <property type="chains" value="A/B=249-545"/>
</dbReference>
<dbReference type="PDB" id="4ZY5">
    <property type="method" value="X-ray"/>
    <property type="resolution" value="2.35 A"/>
    <property type="chains" value="A/B=249-545"/>
</dbReference>
<dbReference type="PDB" id="4ZY6">
    <property type="method" value="X-ray"/>
    <property type="resolution" value="2.15 A"/>
    <property type="chains" value="A/B=249-545"/>
</dbReference>
<dbReference type="PDB" id="5DEW">
    <property type="method" value="X-ray"/>
    <property type="resolution" value="1.90 A"/>
    <property type="chains" value="A/B=249-545"/>
</dbReference>
<dbReference type="PDB" id="5DEY">
    <property type="method" value="X-ray"/>
    <property type="resolution" value="2.10 A"/>
    <property type="chains" value="A/B=249-545"/>
</dbReference>
<dbReference type="PDB" id="5DFP">
    <property type="method" value="X-ray"/>
    <property type="resolution" value="2.20 A"/>
    <property type="chains" value="A=249-545"/>
</dbReference>
<dbReference type="PDB" id="5IME">
    <property type="method" value="X-ray"/>
    <property type="resolution" value="2.22 A"/>
    <property type="chains" value="A/B=249-545"/>
</dbReference>
<dbReference type="PDB" id="5KBQ">
    <property type="method" value="X-ray"/>
    <property type="resolution" value="2.58 A"/>
    <property type="chains" value="A/B=254-542"/>
</dbReference>
<dbReference type="PDB" id="5KBR">
    <property type="method" value="X-ray"/>
    <property type="resolution" value="2.36 A"/>
    <property type="chains" value="A/B=254-542"/>
</dbReference>
<dbReference type="PDB" id="6B16">
    <property type="method" value="X-ray"/>
    <property type="resolution" value="2.29 A"/>
    <property type="chains" value="A/B=249-545"/>
</dbReference>
<dbReference type="PDB" id="7VTO">
    <property type="method" value="X-ray"/>
    <property type="resolution" value="2.59 A"/>
    <property type="chains" value="A/B=249-545"/>
</dbReference>
<dbReference type="PDB" id="8X5Z">
    <property type="method" value="X-ray"/>
    <property type="resolution" value="1.80 A"/>
    <property type="chains" value="A=249-545"/>
</dbReference>
<dbReference type="PDBsum" id="1F3M"/>
<dbReference type="PDBsum" id="1YHV"/>
<dbReference type="PDBsum" id="1YHW"/>
<dbReference type="PDBsum" id="1ZSG"/>
<dbReference type="PDBsum" id="2HY8"/>
<dbReference type="PDBsum" id="2QME"/>
<dbReference type="PDBsum" id="3DVP"/>
<dbReference type="PDBsum" id="3FXZ"/>
<dbReference type="PDBsum" id="3FY0"/>
<dbReference type="PDBsum" id="3Q4Z"/>
<dbReference type="PDBsum" id="3Q52"/>
<dbReference type="PDBsum" id="3Q53"/>
<dbReference type="PDBsum" id="4DAW"/>
<dbReference type="PDBsum" id="4EQC"/>
<dbReference type="PDBsum" id="4O0R"/>
<dbReference type="PDBsum" id="4O0T"/>
<dbReference type="PDBsum" id="4P90"/>
<dbReference type="PDBsum" id="4ZJI"/>
<dbReference type="PDBsum" id="4ZJJ"/>
<dbReference type="PDBsum" id="4ZLO"/>
<dbReference type="PDBsum" id="4ZY4"/>
<dbReference type="PDBsum" id="4ZY5"/>
<dbReference type="PDBsum" id="4ZY6"/>
<dbReference type="PDBsum" id="5DEW"/>
<dbReference type="PDBsum" id="5DEY"/>
<dbReference type="PDBsum" id="5DFP"/>
<dbReference type="PDBsum" id="5IME"/>
<dbReference type="PDBsum" id="5KBQ"/>
<dbReference type="PDBsum" id="5KBR"/>
<dbReference type="PDBsum" id="6B16"/>
<dbReference type="PDBsum" id="7VTO"/>
<dbReference type="PDBsum" id="8X5Z"/>
<dbReference type="BMRB" id="Q13153"/>
<dbReference type="SMR" id="Q13153"/>
<dbReference type="BioGRID" id="111095">
    <property type="interactions" value="199"/>
</dbReference>
<dbReference type="CORUM" id="Q13153"/>
<dbReference type="DIP" id="DIP-31016N"/>
<dbReference type="ELM" id="Q13153"/>
<dbReference type="FunCoup" id="Q13153">
    <property type="interactions" value="1950"/>
</dbReference>
<dbReference type="IntAct" id="Q13153">
    <property type="interactions" value="188"/>
</dbReference>
<dbReference type="MINT" id="Q13153"/>
<dbReference type="STRING" id="9606.ENSP00000278568"/>
<dbReference type="BindingDB" id="Q13153"/>
<dbReference type="ChEMBL" id="CHEMBL4600"/>
<dbReference type="DrugBank" id="DB12010">
    <property type="generic name" value="Fostamatinib"/>
</dbReference>
<dbReference type="DrugCentral" id="Q13153"/>
<dbReference type="GuidetoPHARMACOLOGY" id="2133"/>
<dbReference type="MoonDB" id="Q13153">
    <property type="type" value="Predicted"/>
</dbReference>
<dbReference type="GlyGen" id="Q13153">
    <property type="glycosylation" value="2 sites"/>
</dbReference>
<dbReference type="iPTMnet" id="Q13153"/>
<dbReference type="MetOSite" id="Q13153"/>
<dbReference type="PhosphoSitePlus" id="Q13153"/>
<dbReference type="BioMuta" id="PAK1"/>
<dbReference type="DMDM" id="90111767"/>
<dbReference type="CPTAC" id="CPTAC-2868"/>
<dbReference type="jPOST" id="Q13153"/>
<dbReference type="MassIVE" id="Q13153"/>
<dbReference type="PaxDb" id="9606-ENSP00000278568"/>
<dbReference type="PeptideAtlas" id="Q13153"/>
<dbReference type="ProteomicsDB" id="59193">
    <molecule id="Q13153-1"/>
</dbReference>
<dbReference type="ProteomicsDB" id="59194">
    <molecule id="Q13153-2"/>
</dbReference>
<dbReference type="Pumba" id="Q13153"/>
<dbReference type="Antibodypedia" id="1132">
    <property type="antibodies" value="1381 antibodies from 49 providers"/>
</dbReference>
<dbReference type="DNASU" id="5058"/>
<dbReference type="Ensembl" id="ENST00000278568.8">
    <molecule id="Q13153-2"/>
    <property type="protein sequence ID" value="ENSP00000278568.4"/>
    <property type="gene ID" value="ENSG00000149269.10"/>
</dbReference>
<dbReference type="Ensembl" id="ENST00000356341.8">
    <molecule id="Q13153-1"/>
    <property type="protein sequence ID" value="ENSP00000348696.4"/>
    <property type="gene ID" value="ENSG00000149269.10"/>
</dbReference>
<dbReference type="GeneID" id="5058"/>
<dbReference type="KEGG" id="hsa:5058"/>
<dbReference type="MANE-Select" id="ENST00000356341.8">
    <property type="protein sequence ID" value="ENSP00000348696.4"/>
    <property type="RefSeq nucleotide sequence ID" value="NM_002576.5"/>
    <property type="RefSeq protein sequence ID" value="NP_002567.3"/>
</dbReference>
<dbReference type="UCSC" id="uc001oyg.5">
    <molecule id="Q13153-1"/>
    <property type="organism name" value="human"/>
</dbReference>
<dbReference type="AGR" id="HGNC:8590"/>
<dbReference type="CTD" id="5058"/>
<dbReference type="DisGeNET" id="5058"/>
<dbReference type="GeneCards" id="PAK1"/>
<dbReference type="HGNC" id="HGNC:8590">
    <property type="gene designation" value="PAK1"/>
</dbReference>
<dbReference type="HPA" id="ENSG00000149269">
    <property type="expression patterns" value="Tissue enhanced (brain)"/>
</dbReference>
<dbReference type="MalaCards" id="PAK1"/>
<dbReference type="MIM" id="602590">
    <property type="type" value="gene"/>
</dbReference>
<dbReference type="MIM" id="618158">
    <property type="type" value="phenotype"/>
</dbReference>
<dbReference type="neXtProt" id="NX_Q13153"/>
<dbReference type="OpenTargets" id="ENSG00000149269"/>
<dbReference type="PharmGKB" id="PA32917"/>
<dbReference type="VEuPathDB" id="HostDB:ENSG00000149269"/>
<dbReference type="eggNOG" id="KOG0578">
    <property type="taxonomic scope" value="Eukaryota"/>
</dbReference>
<dbReference type="GeneTree" id="ENSGT00950000182988"/>
<dbReference type="InParanoid" id="Q13153"/>
<dbReference type="OMA" id="YMDFPPL"/>
<dbReference type="OrthoDB" id="2914378at2759"/>
<dbReference type="PAN-GO" id="Q13153">
    <property type="GO annotations" value="7 GO annotations based on evolutionary models"/>
</dbReference>
<dbReference type="PhylomeDB" id="Q13153"/>
<dbReference type="TreeFam" id="TF105351"/>
<dbReference type="BRENDA" id="2.7.11.1">
    <property type="organism ID" value="2681"/>
</dbReference>
<dbReference type="PathwayCommons" id="Q13153"/>
<dbReference type="Reactome" id="R-HSA-202433">
    <property type="pathway name" value="Generation of second messenger molecules"/>
</dbReference>
<dbReference type="Reactome" id="R-HSA-2029482">
    <property type="pathway name" value="Regulation of actin dynamics for phagocytic cup formation"/>
</dbReference>
<dbReference type="Reactome" id="R-HSA-2871796">
    <property type="pathway name" value="FCERI mediated MAPK activation"/>
</dbReference>
<dbReference type="Reactome" id="R-HSA-389359">
    <property type="pathway name" value="CD28 dependent Vav1 pathway"/>
</dbReference>
<dbReference type="Reactome" id="R-HSA-3928662">
    <property type="pathway name" value="EPHB-mediated forward signaling"/>
</dbReference>
<dbReference type="Reactome" id="R-HSA-3928664">
    <property type="pathway name" value="Ephrin signaling"/>
</dbReference>
<dbReference type="Reactome" id="R-HSA-399954">
    <property type="pathway name" value="Sema3A PAK dependent Axon repulsion"/>
</dbReference>
<dbReference type="Reactome" id="R-HSA-428540">
    <property type="pathway name" value="Activation of RAC1"/>
</dbReference>
<dbReference type="Reactome" id="R-HSA-445144">
    <property type="pathway name" value="Signal transduction by L1"/>
</dbReference>
<dbReference type="Reactome" id="R-HSA-445355">
    <property type="pathway name" value="Smooth Muscle Contraction"/>
</dbReference>
<dbReference type="Reactome" id="R-HSA-5218920">
    <property type="pathway name" value="VEGFR2 mediated vascular permeability"/>
</dbReference>
<dbReference type="Reactome" id="R-HSA-5621575">
    <property type="pathway name" value="CD209 (DC-SIGN) signaling"/>
</dbReference>
<dbReference type="Reactome" id="R-HSA-5625740">
    <property type="pathway name" value="RHO GTPases activate PKNs"/>
</dbReference>
<dbReference type="Reactome" id="R-HSA-5627117">
    <property type="pathway name" value="RHO GTPases Activate ROCKs"/>
</dbReference>
<dbReference type="Reactome" id="R-HSA-5627123">
    <property type="pathway name" value="RHO GTPases activate PAKs"/>
</dbReference>
<dbReference type="Reactome" id="R-HSA-5687128">
    <property type="pathway name" value="MAPK6/MAPK4 signaling"/>
</dbReference>
<dbReference type="Reactome" id="R-HSA-8964616">
    <property type="pathway name" value="G beta:gamma signalling through CDC42"/>
</dbReference>
<dbReference type="Reactome" id="R-HSA-9013148">
    <property type="pathway name" value="CDC42 GTPase cycle"/>
</dbReference>
<dbReference type="Reactome" id="R-HSA-9013149">
    <property type="pathway name" value="RAC1 GTPase cycle"/>
</dbReference>
<dbReference type="Reactome" id="R-HSA-9013404">
    <property type="pathway name" value="RAC2 GTPase cycle"/>
</dbReference>
<dbReference type="Reactome" id="R-HSA-9013406">
    <property type="pathway name" value="RHOQ GTPase cycle"/>
</dbReference>
<dbReference type="Reactome" id="R-HSA-9013407">
    <property type="pathway name" value="RHOH GTPase cycle"/>
</dbReference>
<dbReference type="Reactome" id="R-HSA-9013409">
    <property type="pathway name" value="RHOJ GTPase cycle"/>
</dbReference>
<dbReference type="Reactome" id="R-HSA-9013420">
    <property type="pathway name" value="RHOU GTPase cycle"/>
</dbReference>
<dbReference type="Reactome" id="R-HSA-9013423">
    <property type="pathway name" value="RAC3 GTPase cycle"/>
</dbReference>
<dbReference type="Reactome" id="R-HSA-9013424">
    <property type="pathway name" value="RHOV GTPase cycle"/>
</dbReference>
<dbReference type="SignaLink" id="Q13153"/>
<dbReference type="SIGNOR" id="Q13153"/>
<dbReference type="BioGRID-ORCS" id="5058">
    <property type="hits" value="24 hits in 1195 CRISPR screens"/>
</dbReference>
<dbReference type="CD-CODE" id="8C2F96ED">
    <property type="entry name" value="Centrosome"/>
</dbReference>
<dbReference type="CD-CODE" id="FB4E32DD">
    <property type="entry name" value="Presynaptic clusters and postsynaptic densities"/>
</dbReference>
<dbReference type="ChiTaRS" id="PAK1">
    <property type="organism name" value="human"/>
</dbReference>
<dbReference type="EvolutionaryTrace" id="Q13153"/>
<dbReference type="GeneWiki" id="PAK1"/>
<dbReference type="GenomeRNAi" id="5058"/>
<dbReference type="Pharos" id="Q13153">
    <property type="development level" value="Tchem"/>
</dbReference>
<dbReference type="PRO" id="PR:Q13153"/>
<dbReference type="Proteomes" id="UP000005640">
    <property type="component" value="Chromosome 11"/>
</dbReference>
<dbReference type="RNAct" id="Q13153">
    <property type="molecule type" value="protein"/>
</dbReference>
<dbReference type="Bgee" id="ENSG00000149269">
    <property type="expression patterns" value="Expressed in middle temporal gyrus and 181 other cell types or tissues"/>
</dbReference>
<dbReference type="ExpressionAtlas" id="Q13153">
    <property type="expression patterns" value="baseline and differential"/>
</dbReference>
<dbReference type="GO" id="GO:0005884">
    <property type="term" value="C:actin filament"/>
    <property type="evidence" value="ECO:0000314"/>
    <property type="project" value="UniProtKB"/>
</dbReference>
<dbReference type="GO" id="GO:0030424">
    <property type="term" value="C:axon"/>
    <property type="evidence" value="ECO:0000250"/>
    <property type="project" value="UniProtKB"/>
</dbReference>
<dbReference type="GO" id="GO:0005911">
    <property type="term" value="C:cell-cell junction"/>
    <property type="evidence" value="ECO:0000314"/>
    <property type="project" value="UniProtKB"/>
</dbReference>
<dbReference type="GO" id="GO:0005813">
    <property type="term" value="C:centrosome"/>
    <property type="evidence" value="ECO:0007669"/>
    <property type="project" value="UniProtKB-SubCell"/>
</dbReference>
<dbReference type="GO" id="GO:0005694">
    <property type="term" value="C:chromosome"/>
    <property type="evidence" value="ECO:0007669"/>
    <property type="project" value="UniProtKB-SubCell"/>
</dbReference>
<dbReference type="GO" id="GO:0005737">
    <property type="term" value="C:cytoplasm"/>
    <property type="evidence" value="ECO:0000314"/>
    <property type="project" value="UniProtKB"/>
</dbReference>
<dbReference type="GO" id="GO:0005829">
    <property type="term" value="C:cytosol"/>
    <property type="evidence" value="ECO:0000314"/>
    <property type="project" value="HPA"/>
</dbReference>
<dbReference type="GO" id="GO:0030425">
    <property type="term" value="C:dendrite"/>
    <property type="evidence" value="ECO:0000250"/>
    <property type="project" value="UniProtKB"/>
</dbReference>
<dbReference type="GO" id="GO:0005925">
    <property type="term" value="C:focal adhesion"/>
    <property type="evidence" value="ECO:0007669"/>
    <property type="project" value="UniProtKB-SubCell"/>
</dbReference>
<dbReference type="GO" id="GO:0014704">
    <property type="term" value="C:intercalated disc"/>
    <property type="evidence" value="ECO:0000250"/>
    <property type="project" value="UniProtKB"/>
</dbReference>
<dbReference type="GO" id="GO:0030027">
    <property type="term" value="C:lamellipodium"/>
    <property type="evidence" value="ECO:0007669"/>
    <property type="project" value="UniProtKB-SubCell"/>
</dbReference>
<dbReference type="GO" id="GO:0031965">
    <property type="term" value="C:nuclear membrane"/>
    <property type="evidence" value="ECO:0000250"/>
    <property type="project" value="UniProtKB"/>
</dbReference>
<dbReference type="GO" id="GO:0005654">
    <property type="term" value="C:nucleoplasm"/>
    <property type="evidence" value="ECO:0000314"/>
    <property type="project" value="UniProtKB"/>
</dbReference>
<dbReference type="GO" id="GO:0005886">
    <property type="term" value="C:plasma membrane"/>
    <property type="evidence" value="ECO:0000314"/>
    <property type="project" value="HGNC-UCL"/>
</dbReference>
<dbReference type="GO" id="GO:0032991">
    <property type="term" value="C:protein-containing complex"/>
    <property type="evidence" value="ECO:0000314"/>
    <property type="project" value="UniProtKB"/>
</dbReference>
<dbReference type="GO" id="GO:0001726">
    <property type="term" value="C:ruffle"/>
    <property type="evidence" value="ECO:0000314"/>
    <property type="project" value="UniProtKB"/>
</dbReference>
<dbReference type="GO" id="GO:0032587">
    <property type="term" value="C:ruffle membrane"/>
    <property type="evidence" value="ECO:0007669"/>
    <property type="project" value="UniProtKB-SubCell"/>
</dbReference>
<dbReference type="GO" id="GO:0030018">
    <property type="term" value="C:Z disc"/>
    <property type="evidence" value="ECO:0000250"/>
    <property type="project" value="UniProtKB"/>
</dbReference>
<dbReference type="GO" id="GO:0005524">
    <property type="term" value="F:ATP binding"/>
    <property type="evidence" value="ECO:0007669"/>
    <property type="project" value="UniProtKB-KW"/>
</dbReference>
<dbReference type="GO" id="GO:0005518">
    <property type="term" value="F:collagen binding"/>
    <property type="evidence" value="ECO:0000353"/>
    <property type="project" value="UniProtKB"/>
</dbReference>
<dbReference type="GO" id="GO:0043015">
    <property type="term" value="F:gamma-tubulin binding"/>
    <property type="evidence" value="ECO:0000314"/>
    <property type="project" value="UniProtKB"/>
</dbReference>
<dbReference type="GO" id="GO:0042802">
    <property type="term" value="F:identical protein binding"/>
    <property type="evidence" value="ECO:0000353"/>
    <property type="project" value="IntAct"/>
</dbReference>
<dbReference type="GO" id="GO:0004672">
    <property type="term" value="F:protein kinase activity"/>
    <property type="evidence" value="ECO:0000314"/>
    <property type="project" value="UniProtKB"/>
</dbReference>
<dbReference type="GO" id="GO:0019901">
    <property type="term" value="F:protein kinase binding"/>
    <property type="evidence" value="ECO:0007669"/>
    <property type="project" value="Ensembl"/>
</dbReference>
<dbReference type="GO" id="GO:0106310">
    <property type="term" value="F:protein serine kinase activity"/>
    <property type="evidence" value="ECO:0007669"/>
    <property type="project" value="RHEA"/>
</dbReference>
<dbReference type="GO" id="GO:0004674">
    <property type="term" value="F:protein serine/threonine kinase activity"/>
    <property type="evidence" value="ECO:0000314"/>
    <property type="project" value="UniProtKB"/>
</dbReference>
<dbReference type="GO" id="GO:0030036">
    <property type="term" value="P:actin cytoskeleton organization"/>
    <property type="evidence" value="ECO:0000314"/>
    <property type="project" value="UniProtKB"/>
</dbReference>
<dbReference type="GO" id="GO:0006915">
    <property type="term" value="P:apoptotic process"/>
    <property type="evidence" value="ECO:0007669"/>
    <property type="project" value="UniProtKB-KW"/>
</dbReference>
<dbReference type="GO" id="GO:0048754">
    <property type="term" value="P:branching morphogenesis of an epithelial tube"/>
    <property type="evidence" value="ECO:0000315"/>
    <property type="project" value="UniProtKB"/>
</dbReference>
<dbReference type="GO" id="GO:0016477">
    <property type="term" value="P:cell migration"/>
    <property type="evidence" value="ECO:0000315"/>
    <property type="project" value="MGI"/>
</dbReference>
<dbReference type="GO" id="GO:0032869">
    <property type="term" value="P:cellular response to insulin stimulus"/>
    <property type="evidence" value="ECO:0007669"/>
    <property type="project" value="Ensembl"/>
</dbReference>
<dbReference type="GO" id="GO:0009267">
    <property type="term" value="P:cellular response to starvation"/>
    <property type="evidence" value="ECO:0000318"/>
    <property type="project" value="GO_Central"/>
</dbReference>
<dbReference type="GO" id="GO:0021549">
    <property type="term" value="P:cerebellum development"/>
    <property type="evidence" value="ECO:0007669"/>
    <property type="project" value="Ensembl"/>
</dbReference>
<dbReference type="GO" id="GO:0006338">
    <property type="term" value="P:chromatin remodeling"/>
    <property type="evidence" value="ECO:0000314"/>
    <property type="project" value="UniProtKB"/>
</dbReference>
<dbReference type="GO" id="GO:0006974">
    <property type="term" value="P:DNA damage response"/>
    <property type="evidence" value="ECO:0000314"/>
    <property type="project" value="UniProtKB"/>
</dbReference>
<dbReference type="GO" id="GO:0048013">
    <property type="term" value="P:ephrin receptor signaling pathway"/>
    <property type="evidence" value="ECO:0000304"/>
    <property type="project" value="Reactome"/>
</dbReference>
<dbReference type="GO" id="GO:0030010">
    <property type="term" value="P:establishment of cell polarity"/>
    <property type="evidence" value="ECO:0007669"/>
    <property type="project" value="Ensembl"/>
</dbReference>
<dbReference type="GO" id="GO:0006887">
    <property type="term" value="P:exocytosis"/>
    <property type="evidence" value="ECO:0007669"/>
    <property type="project" value="UniProtKB-KW"/>
</dbReference>
<dbReference type="GO" id="GO:0038096">
    <property type="term" value="P:Fc-gamma receptor signaling pathway involved in phagocytosis"/>
    <property type="evidence" value="ECO:0000304"/>
    <property type="project" value="Reactome"/>
</dbReference>
<dbReference type="GO" id="GO:0048012">
    <property type="term" value="P:hepatocyte growth factor receptor signaling pathway"/>
    <property type="evidence" value="ECO:0000315"/>
    <property type="project" value="CAFA"/>
</dbReference>
<dbReference type="GO" id="GO:0035556">
    <property type="term" value="P:intracellular signal transduction"/>
    <property type="evidence" value="ECO:0000318"/>
    <property type="project" value="GO_Central"/>
</dbReference>
<dbReference type="GO" id="GO:0061052">
    <property type="term" value="P:negative regulation of cell growth involved in cardiac muscle cell development"/>
    <property type="evidence" value="ECO:0007669"/>
    <property type="project" value="Ensembl"/>
</dbReference>
<dbReference type="GO" id="GO:0060244">
    <property type="term" value="P:negative regulation of cell proliferation involved in contact inhibition"/>
    <property type="evidence" value="ECO:0000315"/>
    <property type="project" value="UniProtKB"/>
</dbReference>
<dbReference type="GO" id="GO:0048812">
    <property type="term" value="P:neuron projection morphogenesis"/>
    <property type="evidence" value="ECO:0000250"/>
    <property type="project" value="UniProtKB"/>
</dbReference>
<dbReference type="GO" id="GO:0045773">
    <property type="term" value="P:positive regulation of axon extension"/>
    <property type="evidence" value="ECO:0007669"/>
    <property type="project" value="Ensembl"/>
</dbReference>
<dbReference type="GO" id="GO:0030335">
    <property type="term" value="P:positive regulation of cell migration"/>
    <property type="evidence" value="ECO:0000314"/>
    <property type="project" value="UniProtKB"/>
</dbReference>
<dbReference type="GO" id="GO:0008284">
    <property type="term" value="P:positive regulation of cell population proliferation"/>
    <property type="evidence" value="ECO:0000315"/>
    <property type="project" value="BHF-UCL"/>
</dbReference>
<dbReference type="GO" id="GO:0010763">
    <property type="term" value="P:positive regulation of fibroblast migration"/>
    <property type="evidence" value="ECO:0007669"/>
    <property type="project" value="Ensembl"/>
</dbReference>
<dbReference type="GO" id="GO:0046628">
    <property type="term" value="P:positive regulation of insulin receptor signaling pathway"/>
    <property type="evidence" value="ECO:0007669"/>
    <property type="project" value="Ensembl"/>
</dbReference>
<dbReference type="GO" id="GO:0033148">
    <property type="term" value="P:positive regulation of intracellular estrogen receptor signaling pathway"/>
    <property type="evidence" value="ECO:0000314"/>
    <property type="project" value="UniProtKB"/>
</dbReference>
<dbReference type="GO" id="GO:0090063">
    <property type="term" value="P:positive regulation of microtubule nucleation"/>
    <property type="evidence" value="ECO:0000315"/>
    <property type="project" value="UniProtKB"/>
</dbReference>
<dbReference type="GO" id="GO:0031116">
    <property type="term" value="P:positive regulation of microtubule polymerization"/>
    <property type="evidence" value="ECO:0000315"/>
    <property type="project" value="CAFA"/>
</dbReference>
<dbReference type="GO" id="GO:0090314">
    <property type="term" value="P:positive regulation of protein targeting to membrane"/>
    <property type="evidence" value="ECO:0007669"/>
    <property type="project" value="Ensembl"/>
</dbReference>
<dbReference type="GO" id="GO:0051496">
    <property type="term" value="P:positive regulation of stress fiber assembly"/>
    <property type="evidence" value="ECO:0000315"/>
    <property type="project" value="UniProtKB"/>
</dbReference>
<dbReference type="GO" id="GO:1904754">
    <property type="term" value="P:positive regulation of vascular associated smooth muscle cell migration"/>
    <property type="evidence" value="ECO:0007669"/>
    <property type="project" value="Ensembl"/>
</dbReference>
<dbReference type="GO" id="GO:1904707">
    <property type="term" value="P:positive regulation of vascular associated smooth muscle cell proliferation"/>
    <property type="evidence" value="ECO:0007669"/>
    <property type="project" value="Ensembl"/>
</dbReference>
<dbReference type="GO" id="GO:1903608">
    <property type="term" value="P:protein localization to cytoplasmic stress granule"/>
    <property type="evidence" value="ECO:0000314"/>
    <property type="project" value="UniProtKB"/>
</dbReference>
<dbReference type="GO" id="GO:0032956">
    <property type="term" value="P:regulation of actin cytoskeleton organization"/>
    <property type="evidence" value="ECO:0000318"/>
    <property type="project" value="GO_Central"/>
</dbReference>
<dbReference type="GO" id="GO:0050770">
    <property type="term" value="P:regulation of axonogenesis"/>
    <property type="evidence" value="ECO:0000318"/>
    <property type="project" value="GO_Central"/>
</dbReference>
<dbReference type="GO" id="GO:0043408">
    <property type="term" value="P:regulation of MAPK cascade"/>
    <property type="evidence" value="ECO:0000318"/>
    <property type="project" value="GO_Central"/>
</dbReference>
<dbReference type="GO" id="GO:0001666">
    <property type="term" value="P:response to hypoxia"/>
    <property type="evidence" value="ECO:0007669"/>
    <property type="project" value="Ensembl"/>
</dbReference>
<dbReference type="GO" id="GO:0002223">
    <property type="term" value="P:stimulatory C-type lectin receptor signaling pathway"/>
    <property type="evidence" value="ECO:0000304"/>
    <property type="project" value="Reactome"/>
</dbReference>
<dbReference type="GO" id="GO:0042060">
    <property type="term" value="P:wound healing"/>
    <property type="evidence" value="ECO:0000315"/>
    <property type="project" value="UniProtKB"/>
</dbReference>
<dbReference type="CDD" id="cd01093">
    <property type="entry name" value="CRIB_PAK_like"/>
    <property type="match status" value="1"/>
</dbReference>
<dbReference type="CDD" id="cd06654">
    <property type="entry name" value="STKc_PAK1"/>
    <property type="match status" value="1"/>
</dbReference>
<dbReference type="FunFam" id="1.10.510.10:FF:000011">
    <property type="entry name" value="Non-specific serine/threonine protein kinase"/>
    <property type="match status" value="1"/>
</dbReference>
<dbReference type="FunFam" id="3.30.200.20:FF:000069">
    <property type="entry name" value="Non-specific serine/threonine protein kinase"/>
    <property type="match status" value="1"/>
</dbReference>
<dbReference type="FunFam" id="3.90.810.10:FF:000001">
    <property type="entry name" value="Non-specific serine/threonine protein kinase"/>
    <property type="match status" value="1"/>
</dbReference>
<dbReference type="Gene3D" id="3.90.810.10">
    <property type="entry name" value="CRIB domain"/>
    <property type="match status" value="1"/>
</dbReference>
<dbReference type="Gene3D" id="3.30.200.20">
    <property type="entry name" value="Phosphorylase Kinase, domain 1"/>
    <property type="match status" value="1"/>
</dbReference>
<dbReference type="Gene3D" id="1.10.510.10">
    <property type="entry name" value="Transferase(Phosphotransferase) domain 1"/>
    <property type="match status" value="1"/>
</dbReference>
<dbReference type="IDEAL" id="IID00277"/>
<dbReference type="InterPro" id="IPR000095">
    <property type="entry name" value="CRIB_dom"/>
</dbReference>
<dbReference type="InterPro" id="IPR036936">
    <property type="entry name" value="CRIB_dom_sf"/>
</dbReference>
<dbReference type="InterPro" id="IPR011009">
    <property type="entry name" value="Kinase-like_dom_sf"/>
</dbReference>
<dbReference type="InterPro" id="IPR051931">
    <property type="entry name" value="PAK3-like"/>
</dbReference>
<dbReference type="InterPro" id="IPR033923">
    <property type="entry name" value="PAK_BD"/>
</dbReference>
<dbReference type="InterPro" id="IPR000719">
    <property type="entry name" value="Prot_kinase_dom"/>
</dbReference>
<dbReference type="InterPro" id="IPR017441">
    <property type="entry name" value="Protein_kinase_ATP_BS"/>
</dbReference>
<dbReference type="InterPro" id="IPR008271">
    <property type="entry name" value="Ser/Thr_kinase_AS"/>
</dbReference>
<dbReference type="PANTHER" id="PTHR45832:SF10">
    <property type="entry name" value="NON-SPECIFIC SERINE_THREONINE PROTEIN KINASE"/>
    <property type="match status" value="1"/>
</dbReference>
<dbReference type="PANTHER" id="PTHR45832">
    <property type="entry name" value="SERINE/THREONINE-PROTEIN KINASE SAMKA-RELATED-RELATED"/>
    <property type="match status" value="1"/>
</dbReference>
<dbReference type="Pfam" id="PF00786">
    <property type="entry name" value="PBD"/>
    <property type="match status" value="1"/>
</dbReference>
<dbReference type="Pfam" id="PF00069">
    <property type="entry name" value="Pkinase"/>
    <property type="match status" value="1"/>
</dbReference>
<dbReference type="SMART" id="SM00285">
    <property type="entry name" value="PBD"/>
    <property type="match status" value="1"/>
</dbReference>
<dbReference type="SMART" id="SM00220">
    <property type="entry name" value="S_TKc"/>
    <property type="match status" value="1"/>
</dbReference>
<dbReference type="SUPFAM" id="SSF56112">
    <property type="entry name" value="Protein kinase-like (PK-like)"/>
    <property type="match status" value="1"/>
</dbReference>
<dbReference type="PROSITE" id="PS50108">
    <property type="entry name" value="CRIB"/>
    <property type="match status" value="1"/>
</dbReference>
<dbReference type="PROSITE" id="PS00107">
    <property type="entry name" value="PROTEIN_KINASE_ATP"/>
    <property type="match status" value="1"/>
</dbReference>
<dbReference type="PROSITE" id="PS50011">
    <property type="entry name" value="PROTEIN_KINASE_DOM"/>
    <property type="match status" value="1"/>
</dbReference>
<dbReference type="PROSITE" id="PS00108">
    <property type="entry name" value="PROTEIN_KINASE_ST"/>
    <property type="match status" value="1"/>
</dbReference>
<reference key="1">
    <citation type="journal article" date="1996" name="Curr. Biol.">
        <title>Human Ste20 homologue hPAK1 links GTPases to the JNK MAP kinase pathway.</title>
        <authorList>
            <person name="Brown J.L."/>
            <person name="Stowers L."/>
            <person name="Baer M."/>
            <person name="Trejo J."/>
            <person name="Coughlin S."/>
            <person name="Chant J."/>
        </authorList>
    </citation>
    <scope>NUCLEOTIDE SEQUENCE [MRNA] (ISOFORM 1)</scope>
    <scope>FUNCTION</scope>
    <source>
        <tissue>Placenta</tissue>
    </source>
</reference>
<reference key="2">
    <citation type="journal article" date="1997" name="Curr. Biol.">
        <title>Human p21-activated kinase (Pak1) regulates actin organization in mammalian cells.</title>
        <authorList>
            <person name="Sells M.A."/>
            <person name="Knaus U.G."/>
            <person name="Bagrodia S."/>
            <person name="Ambrose D.M."/>
            <person name="Bokoch G.M."/>
            <person name="Chernoff J."/>
        </authorList>
    </citation>
    <scope>NUCLEOTIDE SEQUENCE [MRNA] (ISOFORM 1)</scope>
    <scope>FUNCTION</scope>
</reference>
<reference key="3">
    <citation type="submission" date="1998-06" db="EMBL/GenBank/DDBJ databases">
        <title>Human PAK1B.</title>
        <authorList>
            <person name="Reid T."/>
            <person name="Aspenstroem P."/>
            <person name="Bertoglio J."/>
        </authorList>
    </citation>
    <scope>NUCLEOTIDE SEQUENCE [MRNA] (ISOFORM 2)</scope>
</reference>
<reference key="4">
    <citation type="journal article" date="2006" name="Nature">
        <title>Human chromosome 11 DNA sequence and analysis including novel gene identification.</title>
        <authorList>
            <person name="Taylor T.D."/>
            <person name="Noguchi H."/>
            <person name="Totoki Y."/>
            <person name="Toyoda A."/>
            <person name="Kuroki Y."/>
            <person name="Dewar K."/>
            <person name="Lloyd C."/>
            <person name="Itoh T."/>
            <person name="Takeda T."/>
            <person name="Kim D.-W."/>
            <person name="She X."/>
            <person name="Barlow K.F."/>
            <person name="Bloom T."/>
            <person name="Bruford E."/>
            <person name="Chang J.L."/>
            <person name="Cuomo C.A."/>
            <person name="Eichler E."/>
            <person name="FitzGerald M.G."/>
            <person name="Jaffe D.B."/>
            <person name="LaButti K."/>
            <person name="Nicol R."/>
            <person name="Park H.-S."/>
            <person name="Seaman C."/>
            <person name="Sougnez C."/>
            <person name="Yang X."/>
            <person name="Zimmer A.R."/>
            <person name="Zody M.C."/>
            <person name="Birren B.W."/>
            <person name="Nusbaum C."/>
            <person name="Fujiyama A."/>
            <person name="Hattori M."/>
            <person name="Rogers J."/>
            <person name="Lander E.S."/>
            <person name="Sakaki Y."/>
        </authorList>
    </citation>
    <scope>NUCLEOTIDE SEQUENCE [LARGE SCALE GENOMIC DNA]</scope>
</reference>
<reference key="5">
    <citation type="journal article" date="2004" name="Genome Res.">
        <title>The status, quality, and expansion of the NIH full-length cDNA project: the Mammalian Gene Collection (MGC).</title>
        <authorList>
            <consortium name="The MGC Project Team"/>
        </authorList>
    </citation>
    <scope>NUCLEOTIDE SEQUENCE [LARGE SCALE MRNA] (ISOFORM 1)</scope>
</reference>
<reference key="6">
    <citation type="journal article" date="1997" name="Mol. Cell. Biol.">
        <title>Expression of constitutively active alpha-PAK reveals effects of the kinase on actin and focal complexes.</title>
        <authorList>
            <person name="Manser E."/>
            <person name="Huang H.Y."/>
            <person name="Loo T.H."/>
            <person name="Chen X.Q."/>
            <person name="Dong J.M."/>
            <person name="Leung T."/>
            <person name="Lim L."/>
        </authorList>
    </citation>
    <scope>FUNCTION</scope>
    <scope>CATALYTIC ACTIVITY</scope>
    <scope>AUTOPHOSPHORYLATION</scope>
    <scope>ACTIVITY REGULATION</scope>
    <scope>SUBCELLULAR LOCATION</scope>
</reference>
<reference key="7">
    <citation type="journal article" date="1998" name="J. Biol. Chem.">
        <title>Differential effects of PAK1-activating mutations reveal activity-dependent and -independent effects on cytoskeletal regulation.</title>
        <authorList>
            <person name="Frost J.A."/>
            <person name="Khokhlatchev A."/>
            <person name="Stippec S."/>
            <person name="White M.A."/>
            <person name="Cobb M.H."/>
        </authorList>
    </citation>
    <scope>MUTAGENESIS OF HIS-83 AND HIS-86</scope>
</reference>
<reference key="8">
    <citation type="journal article" date="1998" name="Mol. Cell. Biol.">
        <title>A conserved negative regulatory region in alphaPAK: inhibition of PAK kinases reveals their morphological roles downstream of Cdc42 and Rac1.</title>
        <authorList>
            <person name="Zhao Z.S."/>
            <person name="Manser E."/>
            <person name="Chen X.Q."/>
            <person name="Chong C."/>
            <person name="Leung T."/>
            <person name="Lim L."/>
        </authorList>
    </citation>
    <scope>FUNCTION</scope>
    <scope>AUTOREGULATORY DOMAIN</scope>
</reference>
<reference key="9">
    <citation type="journal article" date="1999" name="J. Biol. Chem.">
        <title>Identification of Grb4/Nckbeta, a src homology 2 and 3 domain-containing adapter protein having similar binding and biological properties to Nck.</title>
        <authorList>
            <person name="Braverman L.E."/>
            <person name="Quilliam L.A."/>
        </authorList>
    </citation>
    <scope>INTERACTION WITH NCK1 AND NCK2</scope>
</reference>
<reference key="10">
    <citation type="journal article" date="1999" name="J. Biol. Chem.">
        <title>Identification of a central phosphorylation site in p21-activated kinase regulating autoinhibition and kinase activity.</title>
        <authorList>
            <person name="Zenke F.T."/>
            <person name="King C.C."/>
            <person name="Bohl B.P."/>
            <person name="Bokoch G.M."/>
        </authorList>
    </citation>
    <scope>CATALYTIC ACTIVITY</scope>
    <scope>AUTOPHOSPHORYLATION</scope>
    <scope>AUTOREGULATORY REGION</scope>
    <scope>FUNCTION</scope>
    <scope>INTERACTION WITH CDC42</scope>
    <scope>PHOSPHORYLATION AT THR-423</scope>
    <scope>MUTAGENESIS OF HIS-83; HIS-86; LEU-107 AND THR-423</scope>
</reference>
<reference key="11">
    <citation type="journal article" date="2000" name="J. Biol. Chem.">
        <title>p21-activated kinase (PAK1) is phosphorylated and activated by 3-phosphoinositide-dependent kinase-1 (PDK1).</title>
        <authorList>
            <person name="King C.C."/>
            <person name="Gardiner E.M."/>
            <person name="Zenke F.T."/>
            <person name="Bohl B.P."/>
            <person name="Newton A.C."/>
            <person name="Hemmings B.A."/>
            <person name="Bokoch G.M."/>
        </authorList>
    </citation>
    <scope>PHOSPHORYLATION AT THR-423 BY PDPK1</scope>
    <scope>INTERACTION WITH PDPK1</scope>
    <scope>ACTIVITY REGULATION</scope>
</reference>
<reference key="12">
    <citation type="journal article" date="2002" name="J. Biol. Chem.">
        <title>Interaction between active Pak1 and Raf-1 is necessary for phosphorylation and activation of Raf-1.</title>
        <authorList>
            <person name="Zang M."/>
            <person name="Hayne C."/>
            <person name="Luo Z."/>
        </authorList>
    </citation>
    <scope>FUNCTION IN PHOSPHORYLATION OF RAF1</scope>
    <scope>INTERACTION WITH RAF1</scope>
</reference>
<reference key="13">
    <citation type="journal article" date="2002" name="J. Cell Sci.">
        <title>GIT1 functions in a motile, multi-molecular signaling complex that regulates protrusive activity and cell migration.</title>
        <authorList>
            <person name="Manabe R."/>
            <person name="Kovalenko M."/>
            <person name="Webb D.J."/>
            <person name="Horwitz A.R."/>
        </authorList>
    </citation>
    <scope>FUNCTION</scope>
    <scope>SUBCELLULAR LOCATION</scope>
</reference>
<reference key="14">
    <citation type="journal article" date="2002" name="Mol. Cell">
        <title>Pak1 kinase homodimers are autoinhibited in trans and dissociated upon activation by Cdc42 and Rac1.</title>
        <authorList>
            <person name="Parrini M.C."/>
            <person name="Lei M."/>
            <person name="Harrison S.C."/>
            <person name="Mayer B.J."/>
        </authorList>
    </citation>
    <scope>SUBUNIT</scope>
    <scope>ACTIVITY REGULATION</scope>
</reference>
<reference key="15">
    <citation type="journal article" date="2003" name="J. Biol. Chem.">
        <title>The C-terminal kinase domain of the p34cdc2-related PITSLRE protein kinase (p110C) associates with p21-activated kinase 1 and inhibits its activity during anoikis.</title>
        <authorList>
            <person name="Chen S."/>
            <person name="Yin X."/>
            <person name="Zhu X."/>
            <person name="Yan J."/>
            <person name="Ji S."/>
            <person name="Chen C."/>
            <person name="Cai M."/>
            <person name="Zhang S."/>
            <person name="Zong H."/>
            <person name="Hu Y."/>
            <person name="Yuan Z."/>
            <person name="Shen Z."/>
            <person name="Gu J."/>
        </authorList>
    </citation>
    <scope>FUNCTION</scope>
    <scope>INTERACTION WITH CDC2L1 AND CDC2L2</scope>
</reference>
<reference key="16">
    <citation type="journal article" date="2003" name="J. Cell Biol.">
        <title>PAK1 phosphorylation of MEK1 regulates fibronectin-stimulated MAPK activation.</title>
        <authorList>
            <person name="Slack-Davis J.K."/>
            <person name="Eblen S.T."/>
            <person name="Zecevic M."/>
            <person name="Boerner S.A."/>
            <person name="Tarcsafalvi A."/>
            <person name="Diaz H.B."/>
            <person name="Marshall M.S."/>
            <person name="Weber M.J."/>
            <person name="Parsons J.T."/>
            <person name="Catling A.D."/>
        </authorList>
    </citation>
    <scope>FUNCTION</scope>
</reference>
<reference key="17">
    <citation type="journal article" date="2003" name="Mol. Cell. Biol.">
        <title>Akt phosphorylation of serine 21 on Pak1 modulates Nck binding and cell migration.</title>
        <authorList>
            <person name="Zhou G.L."/>
            <person name="Zhuo Y."/>
            <person name="King C.C."/>
            <person name="Fryer B.H."/>
            <person name="Bokoch G.M."/>
            <person name="Field J."/>
        </authorList>
    </citation>
    <scope>PHOSPHORYLATION AT SER-21</scope>
    <scope>IDENTIFICATION BY MASS SPECTROMETRY</scope>
    <scope>FUNCTION</scope>
    <scope>INTERACTION WITH NCK1</scope>
    <scope>SUBCELLULAR LOCATION</scope>
</reference>
<reference key="18">
    <citation type="journal article" date="2004" name="J. Biol. Chem.">
        <title>The Down syndrome cell adhesion molecule (DSCAM) interacts with and activates Pak.</title>
        <authorList>
            <person name="Li W."/>
            <person name="Guan K.L."/>
        </authorList>
    </citation>
    <scope>RETRACTED PAPER</scope>
</reference>
<reference key="19">
    <citation type="journal article" date="2015" name="J. Biol. Chem.">
        <title>The Down syndrome cell adhesion molecule (DSCAM) interacts with and activates Pak.</title>
        <authorList>
            <person name="Li W."/>
            <person name="Guan K.L."/>
        </authorList>
    </citation>
    <scope>RETRACTION NOTICE OF PUBMED:15169762</scope>
</reference>
<reference key="20">
    <citation type="journal article" date="2005" name="Cancer Res.">
        <title>Pak1 phosphorylation of snail, a master regulator of epithelial-to-mesenchyme transition, modulates snail's subcellular localization and functions.</title>
        <authorList>
            <person name="Yang Z."/>
            <person name="Rayala S."/>
            <person name="Nguyen D."/>
            <person name="Vadlamudi R.K."/>
            <person name="Chen S."/>
            <person name="Kumar R."/>
        </authorList>
    </citation>
    <scope>FUNCTION</scope>
    <scope>INTERACTION WITH SNAI1</scope>
</reference>
<reference key="21">
    <citation type="journal article" date="2005" name="J. Biol. Chem.">
        <title>Integrin engagement differentially modulates epithelial cell motility by RhoA/ROCK and PAK1.</title>
        <authorList>
            <person name="Zhou H."/>
            <person name="Kramer R.H."/>
        </authorList>
    </citation>
    <scope>FUNCTION</scope>
</reference>
<reference key="22">
    <citation type="journal article" date="2005" name="J. Cell Biol.">
        <title>Essential role of CIB1 in regulating PAK1 activation and cell migration.</title>
        <authorList>
            <person name="Leisner T.M."/>
            <person name="Liu M."/>
            <person name="Jaffer Z.M."/>
            <person name="Chernoff J."/>
            <person name="Parise L.V."/>
        </authorList>
    </citation>
    <scope>INTERACTION WITH CIB1</scope>
    <scope>SUBCELLULAR LOCATION</scope>
</reference>
<reference key="23">
    <citation type="journal article" date="2005" name="Mol. Cell. Biol.">
        <title>p21-activated kinase 1 regulates microtubule dynamics by phosphorylating tubulin cofactor B.</title>
        <authorList>
            <person name="Vadlamudi R.K."/>
            <person name="Barnes C.J."/>
            <person name="Rayala S."/>
            <person name="Li F."/>
            <person name="Balasenthil S."/>
            <person name="Marcus S."/>
            <person name="Goodson H.V."/>
            <person name="Sahin A.A."/>
            <person name="Kumar R."/>
        </authorList>
    </citation>
    <scope>FUNCTION</scope>
    <scope>INTERACTION WITH TBCB</scope>
</reference>
<reference key="24">
    <citation type="journal article" date="2006" name="Nat. Biotechnol.">
        <title>A probability-based approach for high-throughput protein phosphorylation analysis and site localization.</title>
        <authorList>
            <person name="Beausoleil S.A."/>
            <person name="Villen J."/>
            <person name="Gerber S.A."/>
            <person name="Rush J."/>
            <person name="Gygi S.P."/>
        </authorList>
    </citation>
    <scope>PHOSPHORYLATION [LARGE SCALE ANALYSIS] AT THR-212</scope>
    <scope>IDENTIFICATION BY MASS SPECTROMETRY [LARGE SCALE ANALYSIS]</scope>
    <source>
        <tissue>Cervix carcinoma</tissue>
    </source>
</reference>
<reference key="25">
    <citation type="journal article" date="2006" name="Oncogene">
        <title>CRIPak, a novel endogenous Pak1 inhibitor.</title>
        <authorList>
            <person name="Talukder A.H."/>
            <person name="Meng Q."/>
            <person name="Kumar R."/>
        </authorList>
    </citation>
    <scope>CAUTION</scope>
</reference>
<reference key="26">
    <citation type="journal article" date="2007" name="J. Biol. Chem.">
        <title>JAK2 tyrosine kinase phosphorylates PAK1 and regulates PAK1 activity and functions.</title>
        <authorList>
            <person name="Rider L."/>
            <person name="Shatrova A."/>
            <person name="Feener E.P."/>
            <person name="Webb L."/>
            <person name="Diakonova M."/>
        </authorList>
    </citation>
    <scope>FUNCTION</scope>
    <scope>PHOSPHORYLATION AT TYR-153; TYR-201 AND TYR-285</scope>
    <scope>IDENTIFICATION BY MASS SPECTROMETRY</scope>
</reference>
<reference key="27">
    <citation type="journal article" date="2007" name="Proc. Natl. Acad. Sci. U.S.A.">
        <title>Phosphorylation-dependent regulation of nuclear localization and functions of integrin-linked kinase.</title>
        <authorList>
            <person name="Acconcia F."/>
            <person name="Barnes C.J."/>
            <person name="Singh R.R."/>
            <person name="Talukder A.H."/>
            <person name="Kumar R."/>
        </authorList>
    </citation>
    <scope>FUNCTION</scope>
    <scope>CATALYTIC ACTIVITY</scope>
</reference>
<reference key="28">
    <citation type="journal article" date="2007" name="J. Cell Sci.">
        <title>Identification of phosphorylation sites in betaPIX and PAK1.</title>
        <authorList>
            <person name="Mayhew M.W."/>
            <person name="Jeffery E.D."/>
            <person name="Sherman N.E."/>
            <person name="Nelson K."/>
            <person name="Polefrone J.M."/>
            <person name="Pratt S.J."/>
            <person name="Shabanowitz J."/>
            <person name="Parsons J.T."/>
            <person name="Fox J.W."/>
            <person name="Hunt D.F."/>
            <person name="Horwitz A.F."/>
        </authorList>
    </citation>
    <scope>FUNCTION</scope>
    <scope>PHOSPHORYLATION AT SER-21; SER-57; TYR-131; TYR-142; TYR-153; SER-174; THR-185; THR-212 AND TYR-285</scope>
    <scope>IDENTIFICATION BY MASS SPECTROMETRY</scope>
</reference>
<reference key="29">
    <citation type="journal article" date="2008" name="FEBS Lett.">
        <title>Affixin activates Rac1 via betaPIX in C2C12 myoblast.</title>
        <authorList>
            <person name="Matsuda C."/>
            <person name="Kameyama K."/>
            <person name="Suzuki A."/>
            <person name="Mishima W."/>
            <person name="Yamaji S."/>
            <person name="Okamoto H."/>
            <person name="Nishino I."/>
            <person name="Hayashi Y.K."/>
        </authorList>
    </citation>
    <scope>INTERACTION WITH RAC1 AND CDC42</scope>
</reference>
<reference key="30">
    <citation type="journal article" date="2008" name="Hum. Mol. Genet.">
        <title>Scrib regulates PAK activity during the cell migration process.</title>
        <authorList>
            <person name="Nola S."/>
            <person name="Sebbagh M."/>
            <person name="Marchetto S."/>
            <person name="Osmani N."/>
            <person name="Nourry C."/>
            <person name="Audebert S."/>
            <person name="Navarro C."/>
            <person name="Rachel R."/>
            <person name="Montcouquiol M."/>
            <person name="Sans N."/>
            <person name="Etienne-Manneville S."/>
            <person name="Borg J.-P."/>
            <person name="Santoni M.-J."/>
        </authorList>
    </citation>
    <scope>INTERACTION WITH SCRIB</scope>
</reference>
<reference key="31">
    <citation type="journal article" date="2008" name="Proc. Natl. Acad. Sci. U.S.A.">
        <title>A quantitative atlas of mitotic phosphorylation.</title>
        <authorList>
            <person name="Dephoure N."/>
            <person name="Zhou C."/>
            <person name="Villen J."/>
            <person name="Beausoleil S.A."/>
            <person name="Bakalarski C.E."/>
            <person name="Elledge S.J."/>
            <person name="Gygi S.P."/>
        </authorList>
    </citation>
    <scope>PHOSPHORYLATION [LARGE SCALE ANALYSIS] AT THR-230</scope>
    <scope>IDENTIFICATION BY MASS SPECTROMETRY [LARGE SCALE ANALYSIS]</scope>
    <source>
        <tissue>Cervix carcinoma</tissue>
    </source>
</reference>
<reference key="32">
    <citation type="journal article" date="2009" name="Anal. Chem.">
        <title>Lys-N and trypsin cover complementary parts of the phosphoproteome in a refined SCX-based approach.</title>
        <authorList>
            <person name="Gauci S."/>
            <person name="Helbig A.O."/>
            <person name="Slijper M."/>
            <person name="Krijgsveld J."/>
            <person name="Heck A.J."/>
            <person name="Mohammed S."/>
        </authorList>
    </citation>
    <scope>IDENTIFICATION BY MASS SPECTROMETRY [LARGE SCALE ANALYSIS]</scope>
</reference>
<reference key="33">
    <citation type="journal article" date="2009" name="Sci. Signal.">
        <title>Quantitative phosphoproteomic analysis of T cell receptor signaling reveals system-wide modulation of protein-protein interactions.</title>
        <authorList>
            <person name="Mayya V."/>
            <person name="Lundgren D.H."/>
            <person name="Hwang S.-I."/>
            <person name="Rezaul K."/>
            <person name="Wu L."/>
            <person name="Eng J.K."/>
            <person name="Rodionov V."/>
            <person name="Han D.K."/>
        </authorList>
    </citation>
    <scope>PHOSPHORYLATION [LARGE SCALE ANALYSIS] AT SER-204; THR-212; THR-219; SER-220 AND THR-230</scope>
    <scope>IDENTIFICATION BY MASS SPECTROMETRY [LARGE SCALE ANALYSIS]</scope>
    <source>
        <tissue>Leukemic T-cell</tissue>
    </source>
</reference>
<reference key="34">
    <citation type="journal article" date="2010" name="Mol. Cell">
        <title>A functional requirement for PAK1 binding to the KH(2) domain of the fragile X protein-related FXR1.</title>
        <authorList>
            <person name="Say E."/>
            <person name="Tay H.G."/>
            <person name="Zhao Z.S."/>
            <person name="Baskaran Y."/>
            <person name="Li R."/>
            <person name="Lim L."/>
            <person name="Manser E."/>
        </authorList>
    </citation>
    <scope>FUNCTION</scope>
    <scope>CATALYTIC ACTIVITY</scope>
    <scope>PHOSPHORYLATION AT SER-144 AND SER-199</scope>
</reference>
<reference key="35">
    <citation type="journal article" date="2011" name="BMC Syst. Biol.">
        <title>Initial characterization of the human central proteome.</title>
        <authorList>
            <person name="Burkard T.R."/>
            <person name="Planyavsky M."/>
            <person name="Kaupe I."/>
            <person name="Breitwieser F.P."/>
            <person name="Buerckstuemmer T."/>
            <person name="Bennett K.L."/>
            <person name="Superti-Furga G."/>
            <person name="Colinge J."/>
        </authorList>
    </citation>
    <scope>IDENTIFICATION BY MASS SPECTROMETRY [LARGE SCALE ANALYSIS]</scope>
</reference>
<reference key="36">
    <citation type="journal article" date="2011" name="Sci. Signal.">
        <title>System-wide temporal characterization of the proteome and phosphoproteome of human embryonic stem cell differentiation.</title>
        <authorList>
            <person name="Rigbolt K.T."/>
            <person name="Prokhorova T.A."/>
            <person name="Akimov V."/>
            <person name="Henningsen J."/>
            <person name="Johansen P.T."/>
            <person name="Kratchmarova I."/>
            <person name="Kassem M."/>
            <person name="Mann M."/>
            <person name="Olsen J.V."/>
            <person name="Blagoev B."/>
        </authorList>
    </citation>
    <scope>PHOSPHORYLATION [LARGE SCALE ANALYSIS] AT SER-144; SER-149; SER-174; SER-223 AND THR-230</scope>
    <scope>IDENTIFICATION BY MASS SPECTROMETRY [LARGE SCALE ANALYSIS]</scope>
</reference>
<reference key="37">
    <citation type="journal article" date="2012" name="Cell Rep.">
        <title>MORC2 signaling integrates phosphorylation-dependent, ATPase-coupled chromatin remodeling during the DNA damage response.</title>
        <authorList>
            <person name="Li D.Q."/>
            <person name="Nair S.S."/>
            <person name="Ohshiro K."/>
            <person name="Kumar A."/>
            <person name="Nair V.S."/>
            <person name="Pakala S.B."/>
            <person name="Reddy S.D."/>
            <person name="Gajula R.P."/>
            <person name="Eswaran J."/>
            <person name="Aravind L."/>
            <person name="Kumar R."/>
        </authorList>
    </citation>
    <scope>FUNCTION</scope>
    <scope>SUBCELLULAR LOCATION</scope>
    <scope>PHOSPHORYLATION AT THR-212</scope>
</reference>
<reference key="38">
    <citation type="journal article" date="2012" name="J. Biol. Chem.">
        <title>Synapses of amphids defective (SAD-A) kinase promotes glucose-stimulated insulin secretion through activation of p21-activated kinase (PAK1) in pancreatic beta-Cells.</title>
        <authorList>
            <person name="Nie J."/>
            <person name="Sun C."/>
            <person name="Faruque O."/>
            <person name="Ye G."/>
            <person name="Li J."/>
            <person name="Liang Q."/>
            <person name="Chang Z."/>
            <person name="Yang W."/>
            <person name="Han X."/>
            <person name="Shi Y."/>
        </authorList>
    </citation>
    <scope>FUNCTION</scope>
    <scope>INTERACTION WITH BRSK2</scope>
    <scope>PHOSPHORYLATION AT THR-423</scope>
</reference>
<reference key="39">
    <citation type="journal article" date="2012" name="Proc. Natl. Acad. Sci. U.S.A.">
        <title>N-terminal acetylome analyses and functional insights of the N-terminal acetyltransferase NatB.</title>
        <authorList>
            <person name="Van Damme P."/>
            <person name="Lasa M."/>
            <person name="Polevoda B."/>
            <person name="Gazquez C."/>
            <person name="Elosegui-Artola A."/>
            <person name="Kim D.S."/>
            <person name="De Juan-Pardo E."/>
            <person name="Demeyer K."/>
            <person name="Hole K."/>
            <person name="Larrea E."/>
            <person name="Timmerman E."/>
            <person name="Prieto J."/>
            <person name="Arnesen T."/>
            <person name="Sherman F."/>
            <person name="Gevaert K."/>
            <person name="Aldabe R."/>
        </authorList>
    </citation>
    <scope>ACETYLATION [LARGE SCALE ANALYSIS] AT SER-2</scope>
    <scope>CLEAVAGE OF INITIATOR METHIONINE [LARGE SCALE ANALYSIS]</scope>
    <scope>IDENTIFICATION BY MASS SPECTROMETRY [LARGE SCALE ANALYSIS]</scope>
</reference>
<reference key="40">
    <citation type="journal article" date="2013" name="J. Proteome Res.">
        <title>Toward a comprehensive characterization of a human cancer cell phosphoproteome.</title>
        <authorList>
            <person name="Zhou H."/>
            <person name="Di Palma S."/>
            <person name="Preisinger C."/>
            <person name="Peng M."/>
            <person name="Polat A.N."/>
            <person name="Heck A.J."/>
            <person name="Mohammed S."/>
        </authorList>
    </citation>
    <scope>PHOSPHORYLATION [LARGE SCALE ANALYSIS] AT THR-230</scope>
    <scope>IDENTIFICATION BY MASS SPECTROMETRY [LARGE SCALE ANALYSIS]</scope>
    <source>
        <tissue>Cervix carcinoma</tissue>
        <tissue>Erythroleukemia</tissue>
    </source>
</reference>
<reference key="41">
    <citation type="journal article" date="2014" name="J. Proteomics">
        <title>An enzyme assisted RP-RPLC approach for in-depth analysis of human liver phosphoproteome.</title>
        <authorList>
            <person name="Bian Y."/>
            <person name="Song C."/>
            <person name="Cheng K."/>
            <person name="Dong M."/>
            <person name="Wang F."/>
            <person name="Huang J."/>
            <person name="Sun D."/>
            <person name="Wang L."/>
            <person name="Ye M."/>
            <person name="Zou H."/>
        </authorList>
    </citation>
    <scope>PHOSPHORYLATION [LARGE SCALE ANALYSIS] AT SER-115</scope>
    <scope>IDENTIFICATION BY MASS SPECTROMETRY [LARGE SCALE ANALYSIS]</scope>
    <source>
        <tissue>Liver</tissue>
    </source>
</reference>
<reference key="42">
    <citation type="journal article" date="2014" name="Oncogene">
        <title>A novel splice variant of calcium and integrin-binding protein 1 mediates protein kinase D2-stimulated tumour growth by regulating angiogenesis.</title>
        <authorList>
            <person name="Armacki M."/>
            <person name="Joodi G."/>
            <person name="Nimmagadda S.C."/>
            <person name="de Kimpe L."/>
            <person name="Pusapati G.V."/>
            <person name="Vandoninck S."/>
            <person name="Van Lint J."/>
            <person name="Illing A."/>
            <person name="Seufferlein T."/>
        </authorList>
    </citation>
    <scope>INTERACTION WITH CIB1 ISOFORM 2</scope>
    <source>
        <tissue>Brain</tissue>
    </source>
</reference>
<reference key="43">
    <citation type="journal article" date="2013" name="Sci. Signal.">
        <title>Beta-arrestin-dependent activation of the cofilin pathway is required for the scavenging activity of the atypical chemokine receptor D6.</title>
        <authorList>
            <person name="Borroni E.M."/>
            <person name="Cancellieri C."/>
            <person name="Vacchini A."/>
            <person name="Benureau Y."/>
            <person name="Lagane B."/>
            <person name="Bachelerie F."/>
            <person name="Arenzana-Seisdedos F."/>
            <person name="Mizuno K."/>
            <person name="Mantovani A."/>
            <person name="Bonecchi R."/>
            <person name="Locati M."/>
        </authorList>
    </citation>
    <scope>FUNCTION</scope>
    <scope>PHOSPHORYLATION</scope>
</reference>
<reference key="44">
    <citation type="journal article" date="2015" name="Cell Death Dis.">
        <title>PAK1 regulates RUFY3-mediated gastric cancer cell migration and invasion.</title>
        <authorList>
            <person name="Wang G."/>
            <person name="Zhang Q."/>
            <person name="Song Y."/>
            <person name="Wang X."/>
            <person name="Guo Q."/>
            <person name="Zhang J."/>
            <person name="Li J."/>
            <person name="Han Y."/>
            <person name="Miao Z."/>
            <person name="Li F."/>
        </authorList>
    </citation>
    <scope>FUNCTION</scope>
    <scope>COLOCALIZATION WITH RUFY3</scope>
    <scope>SUBCELLULAR LOCATION</scope>
    <scope>TISSUE SPECIFICITY</scope>
</reference>
<reference key="45">
    <citation type="journal article" date="2015" name="J. Cell Biol.">
        <title>PAK4 promotes kinase-independent stabilization of RhoU to modulate cell adhesion.</title>
        <authorList>
            <person name="Dart A.E."/>
            <person name="Box G.M."/>
            <person name="Court W."/>
            <person name="Gale M.E."/>
            <person name="Brown J.P."/>
            <person name="Pinder S.E."/>
            <person name="Eccles S.A."/>
            <person name="Wells C.M."/>
        </authorList>
    </citation>
    <scope>INTERACTION WITH RHOU</scope>
</reference>
<reference key="46">
    <citation type="journal article" date="2016" name="Biochim. Biophys. Acta">
        <title>GIT1/betaPIX signaling proteins and PAK1 kinase regulate microtubule nucleation.</title>
        <authorList>
            <person name="Cernohorska M."/>
            <person name="Sulimenko V."/>
            <person name="Hajkova Z."/>
            <person name="Sulimenko T."/>
            <person name="Sladkova V."/>
            <person name="Vinopal S."/>
            <person name="Draberova E."/>
            <person name="Draber P."/>
        </authorList>
    </citation>
    <scope>FUNCTION</scope>
    <scope>INTERACTION WITH ARHGEF7; GAMMA-TUBULIN AND GIT1</scope>
    <scope>SUBCELLULAR LOCATION</scope>
</reference>
<reference key="47">
    <citation type="journal article" date="2016" name="Genes Cells">
        <title>Glucose-regulated protein 78 (GRP78) binds directly to PIP3 phosphatase SKIP and determines its localization.</title>
        <authorList>
            <person name="Ijuin T."/>
            <person name="Hatano N."/>
            <person name="Takenawa T."/>
        </authorList>
    </citation>
    <scope>INTERACTION WITH INPP5K</scope>
</reference>
<reference key="48">
    <citation type="journal article" date="2018" name="Am. J. Hum. Genet.">
        <title>Activating mutations in PAK1, encoding p21-activated kinase 1, cause a neurodevelopmental disorder.</title>
        <authorList>
            <person name="Harms F.L."/>
            <person name="Kloth K."/>
            <person name="Bley A."/>
            <person name="Denecke J."/>
            <person name="Santer R."/>
            <person name="Lessel D."/>
            <person name="Hempel M."/>
            <person name="Kutsche K."/>
        </authorList>
    </citation>
    <scope>INVOLVEMENT IN IDDMSSD</scope>
    <scope>VARIANTS IDDMSSD CYS-131 AND CYS-429</scope>
    <scope>CHARACTERIZATION OF VARIANTS IDDMSSD CYS-131 AND CYS-429</scope>
    <scope>FUNCTION</scope>
    <scope>HOMODIMERIZATION</scope>
</reference>
<reference key="49">
    <citation type="journal article" date="2000" name="Cell">
        <title>Structure of PAK1 in an autoinhibited conformation reveals a multistage activation switch.</title>
        <authorList>
            <person name="Lei M."/>
            <person name="Lu W."/>
            <person name="Meng W."/>
            <person name="Parrini M.C."/>
            <person name="Eck M.J."/>
            <person name="Mayer B.J."/>
            <person name="Harrison S.C."/>
        </authorList>
    </citation>
    <scope>X-RAY CRYSTALLOGRAPHY (2.3 ANGSTROMS) OF 70-545</scope>
</reference>
<reference key="50">
    <citation type="journal article" date="2005" name="Biochemistry">
        <title>Structural analysis of the SH3 domain of beta-PIX and its interaction with alpha-p21 activated kinase (PAK).</title>
        <authorList>
            <person name="Mott H.R."/>
            <person name="Nietlispach D."/>
            <person name="Evetts K.A."/>
            <person name="Owen D."/>
        </authorList>
    </citation>
    <scope>STRUCTURE BY NMR OF 183-204 IN COMPLEX WITH ARHGEF7</scope>
    <scope>INTERACTION WITH ARHGEF7</scope>
</reference>
<reference key="51">
    <citation type="journal article" date="2005" name="Structure">
        <title>The active conformation of the PAK1 kinase domain.</title>
        <authorList>
            <person name="Lei M."/>
            <person name="Robinson M.A."/>
            <person name="Harrison S.C."/>
        </authorList>
    </citation>
    <scope>X-RAY CRYSTALLOGRAPHY (1.8 ANGSTROMS) OF 249-545</scope>
    <scope>ACTIVITY REGULATION</scope>
</reference>
<reference key="52">
    <citation type="journal article" date="2011" name="Structure">
        <title>Structural insights into the autoactivation mechanism of p21-activated protein kinase.</title>
        <authorList>
            <person name="Wang J."/>
            <person name="Wu J.W."/>
            <person name="Wang Z.X."/>
        </authorList>
    </citation>
    <scope>X-RAY CRYSTALLOGRAPHY (1.80 ANGSTROMS) OF 248-545 OF MUTANT ARG-299 IN COMPLEX WITH ATP ANALOG AMP-PNP</scope>
    <scope>COFACTOR</scope>
    <scope>ACTIVE SITE</scope>
    <scope>MUTAGENESIS OF LYS-299; ASP-389 AND ASP-393</scope>
    <scope>CATALYTIC ACTIVITY</scope>
    <scope>AUTOPHOSPHORYLATION</scope>
    <scope>SUBUNIT</scope>
    <scope>PHOSPHORYLATION AT THR-423</scope>
</reference>
<sequence length="545" mass="60647">MSNNGLDIQDKPPAPPMRNTSTMIGAGSKDAGTLNHGSKPLPPNPEEKKKKDRFYRSILPGDKTNKKKEKERPEISLPSDFEHTIHVGFDAVTGEFTGMPEQWARLLQTSNITKSEQKKNPQAVLDVLEFYNSKKTSNSQKYMSFTDKSAEDYNSSNALNVKAVSETPAVPPVSEDEDDDDDDATPPPVIAPRPEHTKSVYTRSVIEPLPVTPTRDVATSPISPTENNTTPPDALTRNTEKQKKKPKMSDEEILEKLRSIVSVGDPKKKYTRFEKIGQGASGTVYTAMDVATGQEVAIKQMNLQQQPKKELIINEILVMRENKNPNIVNYLDSYLVGDELWVVMEYLAGGSLTDVVTETCMDEGQIAAVCRECLQALEFLHSNQVIHRDIKSDNILLGMDGSVKLTDFGFCAQITPEQSKRSTMVGTPYWMAPEVVTRKAYGPKVDIWSLGIMAIEMIEGEPPYLNENPLRALYLIATNGTPELQNPEKLSAIFRDFLNRCLEMDVEKRGSAKELLQHQFLKIAKPLSSLTPLIAAAKEATKNNH</sequence>
<comment type="function">
    <text evidence="1 2 7 9 11 12 13 14 15 16 17 22 23 24 27 29 30 32 33 36 37 38 39 40 41">Protein kinase involved in intracellular signaling pathways downstream of integrins and receptor-type kinases that plays an important role in cytoskeleton dynamics, in cell adhesion, migration, proliferation, apoptosis, mitosis, and in vesicle-mediated transport processes (PubMed:10551809, PubMed:11896197, PubMed:12876277, PubMed:14585966, PubMed:15611088, PubMed:17726028, PubMed:17989089, PubMed:30290153, PubMed:17420447). Can directly phosphorylate BAD and protects cells against apoptosis (By similarity). Activated by interaction with CDC42 and RAC1 (PubMed:8805275, PubMed:9528787). Functions as a GTPase effector that links the Rho-related GTPases CDC42 and RAC1 to the JNK MAP kinase pathway (PubMed:8805275, PubMed:9528787). Phosphorylates and activates MAP2K1, and thereby mediates activation of downstream MAP kinases (By similarity). Involved in the reorganization of the actin cytoskeleton, actin stress fibers and of focal adhesion complexes (PubMed:9032240, PubMed:9395435). Phosphorylates the tubulin chaperone TBCB and thereby plays a role in the regulation of microtubule biogenesis and organization of the tubulin cytoskeleton (PubMed:15831477). Plays a role in the regulation of insulin secretion in response to elevated glucose levels (PubMed:22669945). Part of a ternary complex that contains PAK1, DVL1 and MUSK that is important for MUSK-dependent regulation of AChR clustering during the formation of the neuromuscular junction (NMJ) (By similarity). Activity is inhibited in cells undergoing apoptosis, potentially due to binding of CDC2L1 and CDC2L2 (PubMed:12624090). Phosphorylates MYL9/MLC2 (By similarity). Phosphorylates RAF1 at 'Ser-338' and 'Ser-339' resulting in: activation of RAF1, stimulation of RAF1 translocation to mitochondria, phosphorylation of BAD by RAF1, and RAF1 binding to BCL2 (PubMed:11733498). Phosphorylates SNAI1 at 'Ser-246' promoting its transcriptional repressor activity by increasing its accumulation in the nucleus (PubMed:15833848). In podocytes, promotes NR3C2 nuclear localization (By similarity). Required for atypical chemokine receptor ACKR2-induced phosphorylation of LIMK1 and cofilin (CFL1) and for the up-regulation of ACKR2 from endosomal compartment to cell membrane, increasing its efficiency in chemokine uptake and degradation (PubMed:23633677). In synapses, seems to mediate the regulation of F-actin cluster formation performed by SHANK3, maybe through CFL1 phosphorylation and inactivation (By similarity). Plays a role in RUFY3-mediated facilitating gastric cancer cells migration and invasion (PubMed:25766321). In response to DNA damage, phosphorylates MORC2 which activates its ATPase activity and facilitates chromatin remodeling (PubMed:23260667). In neurons, plays a crucial role in regulating GABA(A) receptor synaptic stability and hence GABAergic inhibitory synaptic transmission through its role in F-actin stabilization (By similarity). In hippocampal neurons, necessary for the formation of dendritic spines and excitatory synapses; this function is dependent on kinase activity and may be exerted by the regulation of actomyosin contractility through the phosphorylation of myosin II regulatory light chain (MLC) (By similarity). Along with GIT1, positively regulates microtubule nucleation during interphase (PubMed:27012601). Phosphorylates FXR1, promoting its localization to stress granules and activity (PubMed:20417602). Phosphorylates ILK on 'Thr-173' and 'Ser-246', promoting nuclear export of ILK (PubMed:17420447).</text>
</comment>
<comment type="catalytic activity">
    <reaction evidence="7 22 27 28 39">
        <text>L-seryl-[protein] + ATP = O-phospho-L-seryl-[protein] + ADP + H(+)</text>
        <dbReference type="Rhea" id="RHEA:17989"/>
        <dbReference type="Rhea" id="RHEA-COMP:9863"/>
        <dbReference type="Rhea" id="RHEA-COMP:11604"/>
        <dbReference type="ChEBI" id="CHEBI:15378"/>
        <dbReference type="ChEBI" id="CHEBI:29999"/>
        <dbReference type="ChEBI" id="CHEBI:30616"/>
        <dbReference type="ChEBI" id="CHEBI:83421"/>
        <dbReference type="ChEBI" id="CHEBI:456216"/>
        <dbReference type="EC" id="2.7.11.1"/>
    </reaction>
</comment>
<comment type="catalytic activity">
    <reaction evidence="7 22 28 39">
        <text>L-threonyl-[protein] + ATP = O-phospho-L-threonyl-[protein] + ADP + H(+)</text>
        <dbReference type="Rhea" id="RHEA:46608"/>
        <dbReference type="Rhea" id="RHEA-COMP:11060"/>
        <dbReference type="Rhea" id="RHEA-COMP:11605"/>
        <dbReference type="ChEBI" id="CHEBI:15378"/>
        <dbReference type="ChEBI" id="CHEBI:30013"/>
        <dbReference type="ChEBI" id="CHEBI:30616"/>
        <dbReference type="ChEBI" id="CHEBI:61977"/>
        <dbReference type="ChEBI" id="CHEBI:456216"/>
        <dbReference type="EC" id="2.7.11.1"/>
    </reaction>
</comment>
<comment type="cofactor">
    <cofactor evidence="28">
        <name>Mg(2+)</name>
        <dbReference type="ChEBI" id="CHEBI:18420"/>
    </cofactor>
</comment>
<comment type="activity regulation">
    <text evidence="2 8 10 18 39">Activated by binding small G proteins. Binding of GTP-bound CDC42 or RAC1 to the autoregulatory region releases monomers from the autoinhibited dimer, and enables activation by phosphorylation of Thr-423 (PubMed:10995762, PubMed:11804587, PubMed:15893667, PubMed:9032240). Phosphorylation of Thr-84 by OXSR1 inhibits activation (By similarity).</text>
</comment>
<comment type="subunit">
    <text evidence="1 2 6 7 8 9 10 12 14 16 17 19 20 21 25 26 28 29 31 34 35 36 37">Homodimer; homodimerization results in autoinhibition (PubMed:30290153). Active as monomer. Interacts with GIT1 (PubMed:27012601). Component of cytoplasmic complexes, which also contains PXN, ARHGEF7 and GIT1. Interacts with NISCH (By similarity). Interacts with DVL1; mediates the formation of a DVL1, MUSK and PAK1 ternary complex involved in AChR clustering (By similarity). Binds to the caspase-cleaved p110 isoform of CDC2L1 and CDC2L2, p110C, but not the full-length proteins (PubMed:12624090). Interacts with ARHGEF7 (PubMed:16101281, PubMed:27012601). Interacts tightly with GTP-bound but not GDP-bound CDC42/P21 and RAC1 (By similarity). Interacts with SCRIB (PubMed:18716323). Interacts with PDPK1 (PubMed:10995762). Interacts (via kinase domain) with RAF1 (PubMed:11733498). Interacts with NCK1 and NCK2 (PubMed:10026169). Interacts with TBCB (PubMed:15831477). Interacts with BRSK2 (By similarity). Interacts with SNAI1 (PubMed:15833848). Interacts with CIB1 isoform 2 (PubMed:23503467). Interacts with CIB1 (via N-terminal region); the interaction is direct, promotes PAK1 activity and occurs in a calcium-dependent manner. Interacts with INPP5K (PubMed:26940976). Interacts with gamma-tubulin (PubMed:27012601). Interacts with RHOU; the interaction promotes PAK1 activation (PubMed:26598620).</text>
</comment>
<comment type="interaction">
    <interactant intactId="EBI-1307">
        <id>Q13153</id>
    </interactant>
    <interactant intactId="EBI-2907070">
        <id>P11117</id>
        <label>ACP2</label>
    </interactant>
    <organismsDiffer>false</organismsDiffer>
    <experiments>3</experiments>
</comment>
<comment type="interaction">
    <interactant intactId="EBI-1307">
        <id>Q13153</id>
    </interactant>
    <interactant intactId="EBI-2809187">
        <id>P35611</id>
        <label>ADD1</label>
    </interactant>
    <organismsDiffer>false</organismsDiffer>
    <experiments>3</experiments>
</comment>
<comment type="interaction">
    <interactant intactId="EBI-1307">
        <id>Q13153</id>
    </interactant>
    <interactant intactId="EBI-1642523">
        <id>Q15052</id>
        <label>ARHGEF6</label>
    </interactant>
    <organismsDiffer>false</organismsDiffer>
    <experiments>7</experiments>
</comment>
<comment type="interaction">
    <interactant intactId="EBI-1307">
        <id>Q13153</id>
    </interactant>
    <interactant intactId="EBI-717515">
        <id>Q14155</id>
        <label>ARHGEF7</label>
    </interactant>
    <organismsDiffer>false</organismsDiffer>
    <experiments>16</experiments>
</comment>
<comment type="interaction">
    <interactant intactId="EBI-1307">
        <id>Q13153</id>
    </interactant>
    <interactant intactId="EBI-12108466">
        <id>Q9H0W9-3</id>
        <label>C11orf54</label>
    </interactant>
    <organismsDiffer>false</organismsDiffer>
    <experiments>3</experiments>
</comment>
<comment type="interaction">
    <interactant intactId="EBI-1307">
        <id>Q13153</id>
    </interactant>
    <interactant intactId="EBI-81752">
        <id>P60953</id>
        <label>CDC42</label>
    </interactant>
    <organismsDiffer>false</organismsDiffer>
    <experiments>12</experiments>
</comment>
<comment type="interaction">
    <interactant intactId="EBI-1307">
        <id>Q13153</id>
    </interactant>
    <interactant intactId="EBI-1298">
        <id>P21127</id>
        <label>CDK11B</label>
    </interactant>
    <organismsDiffer>false</organismsDiffer>
    <experiments>4</experiments>
</comment>
<comment type="interaction">
    <interactant intactId="EBI-1307">
        <id>Q13153</id>
    </interactant>
    <interactant intactId="EBI-349105">
        <id>P63167</id>
        <label>DYNLL1</label>
    </interactant>
    <organismsDiffer>false</organismsDiffer>
    <experiments>4</experiments>
</comment>
<comment type="interaction">
    <interactant intactId="EBI-1307">
        <id>Q13153</id>
    </interactant>
    <interactant intactId="EBI-12013806">
        <id>Q6NZ36-4</id>
        <label>FAAP20</label>
    </interactant>
    <organismsDiffer>false</organismsDiffer>
    <experiments>3</experiments>
</comment>
<comment type="interaction">
    <interactant intactId="EBI-1307">
        <id>Q13153</id>
    </interactant>
    <interactant intactId="EBI-466061">
        <id>Q9Y2X7</id>
        <label>GIT1</label>
    </interactant>
    <organismsDiffer>false</organismsDiffer>
    <experiments>5</experiments>
</comment>
<comment type="interaction">
    <interactant intactId="EBI-1307">
        <id>Q13153</id>
    </interactant>
    <interactant intactId="EBI-1046878">
        <id>Q14161</id>
        <label>GIT2</label>
    </interactant>
    <organismsDiffer>false</organismsDiffer>
    <experiments>4</experiments>
</comment>
<comment type="interaction">
    <interactant intactId="EBI-1307">
        <id>Q13153</id>
    </interactant>
    <interactant intactId="EBI-12353035">
        <id>Q13322-4</id>
        <label>GRB10</label>
    </interactant>
    <organismsDiffer>false</organismsDiffer>
    <experiments>3</experiments>
</comment>
<comment type="interaction">
    <interactant intactId="EBI-1307">
        <id>Q13153</id>
    </interactant>
    <interactant intactId="EBI-714379">
        <id>Q9Y2M5</id>
        <label>KLHL20</label>
    </interactant>
    <organismsDiffer>false</organismsDiffer>
    <experiments>3</experiments>
</comment>
<comment type="interaction">
    <interactant intactId="EBI-1307">
        <id>Q13153</id>
    </interactant>
    <interactant intactId="EBI-9088686">
        <id>Q14847-2</id>
        <label>LASP1</label>
    </interactant>
    <organismsDiffer>false</organismsDiffer>
    <experiments>3</experiments>
</comment>
<comment type="interaction">
    <interactant intactId="EBI-1307">
        <id>Q13153</id>
    </interactant>
    <interactant intactId="EBI-444403">
        <id>P53667</id>
        <label>LIMK1</label>
    </interactant>
    <organismsDiffer>false</organismsDiffer>
    <experiments>5</experiments>
</comment>
<comment type="interaction">
    <interactant intactId="EBI-1307">
        <id>Q13153</id>
    </interactant>
    <interactant intactId="EBI-298304">
        <id>Q15759</id>
        <label>MAPK11</label>
    </interactant>
    <organismsDiffer>false</organismsDiffer>
    <experiments>3</experiments>
</comment>
<comment type="interaction">
    <interactant intactId="EBI-1307">
        <id>Q13153</id>
    </interactant>
    <interactant intactId="EBI-713635">
        <id>O43639</id>
        <label>NCK2</label>
    </interactant>
    <organismsDiffer>false</organismsDiffer>
    <experiments>13</experiments>
</comment>
<comment type="interaction">
    <interactant intactId="EBI-1307">
        <id>Q13153</id>
    </interactant>
    <interactant intactId="EBI-1051262">
        <id>Q9Y239</id>
        <label>NOD1</label>
    </interactant>
    <organismsDiffer>false</organismsDiffer>
    <experiments>3</experiments>
</comment>
<comment type="interaction">
    <interactant intactId="EBI-1307">
        <id>Q13153</id>
    </interactant>
    <interactant intactId="EBI-636374">
        <id>P46531</id>
        <label>NOTCH1</label>
    </interactant>
    <organismsDiffer>false</organismsDiffer>
    <experiments>4</experiments>
</comment>
<comment type="interaction">
    <interactant intactId="EBI-1307">
        <id>Q13153</id>
    </interactant>
    <interactant intactId="EBI-9087860">
        <id>P32243-2</id>
        <label>OTX2</label>
    </interactant>
    <organismsDiffer>false</organismsDiffer>
    <experiments>3</experiments>
</comment>
<comment type="interaction">
    <interactant intactId="EBI-1307">
        <id>Q13153</id>
    </interactant>
    <interactant intactId="EBI-946095">
        <id>Q15365</id>
        <label>PCBP1</label>
    </interactant>
    <organismsDiffer>false</organismsDiffer>
    <experiments>2</experiments>
</comment>
<comment type="interaction">
    <interactant intactId="EBI-1307">
        <id>Q13153</id>
    </interactant>
    <interactant intactId="EBI-25879276">
        <id>Q8N490-3</id>
        <label>PNKD</label>
    </interactant>
    <organismsDiffer>false</organismsDiffer>
    <experiments>3</experiments>
</comment>
<comment type="interaction">
    <interactant intactId="EBI-1307">
        <id>Q13153</id>
    </interactant>
    <interactant intactId="EBI-413628">
        <id>P63000</id>
        <label>RAC1</label>
    </interactant>
    <organismsDiffer>false</organismsDiffer>
    <experiments>26</experiments>
</comment>
<comment type="interaction">
    <interactant intactId="EBI-1307">
        <id>Q13153</id>
    </interactant>
    <interactant intactId="EBI-7212896">
        <id>P63000-1</id>
        <label>RAC1</label>
    </interactant>
    <organismsDiffer>false</organismsDiffer>
    <experiments>3</experiments>
</comment>
<comment type="interaction">
    <interactant intactId="EBI-1307">
        <id>Q13153</id>
    </interactant>
    <interactant intactId="EBI-365996">
        <id>P04049</id>
        <label>RAF1</label>
    </interactant>
    <organismsDiffer>false</organismsDiffer>
    <experiments>2</experiments>
</comment>
<comment type="interaction">
    <interactant intactId="EBI-1307">
        <id>Q13153</id>
    </interactant>
    <interactant intactId="EBI-25839575">
        <id>Q8WZ73-3</id>
        <label>RFFL</label>
    </interactant>
    <organismsDiffer>false</organismsDiffer>
    <experiments>3</experiments>
</comment>
<comment type="interaction">
    <interactant intactId="EBI-1307">
        <id>Q13153</id>
    </interactant>
    <interactant intactId="EBI-6285694">
        <id>Q9H4E5</id>
        <label>RHOJ</label>
    </interactant>
    <organismsDiffer>false</organismsDiffer>
    <experiments>4</experiments>
</comment>
<comment type="interaction">
    <interactant intactId="EBI-1307">
        <id>Q13153</id>
    </interactant>
    <interactant intactId="EBI-365845">
        <id>Q92963</id>
        <label>RIT1</label>
    </interactant>
    <organismsDiffer>false</organismsDiffer>
    <experiments>4</experiments>
</comment>
<comment type="interaction">
    <interactant intactId="EBI-1307">
        <id>Q13153</id>
    </interactant>
    <interactant intactId="EBI-9089805">
        <id>Q9NTN9-3</id>
        <label>SEMA4G</label>
    </interactant>
    <organismsDiffer>false</organismsDiffer>
    <experiments>3</experiments>
</comment>
<comment type="interaction">
    <interactant intactId="EBI-1307">
        <id>Q13153</id>
    </interactant>
    <interactant intactId="EBI-2659201">
        <id>Q96BD6</id>
        <label>SPSB1</label>
    </interactant>
    <organismsDiffer>false</organismsDiffer>
    <experiments>3</experiments>
</comment>
<comment type="interaction">
    <interactant intactId="EBI-1307">
        <id>Q13153</id>
    </interactant>
    <interactant intactId="EBI-714135">
        <id>O75558</id>
        <label>STX11</label>
    </interactant>
    <organismsDiffer>false</organismsDiffer>
    <experiments>3</experiments>
</comment>
<comment type="interaction">
    <interactant intactId="EBI-1307">
        <id>Q13153</id>
    </interactant>
    <interactant intactId="EBI-11123832">
        <id>O60506-4</id>
        <label>SYNCRIP</label>
    </interactant>
    <organismsDiffer>false</organismsDiffer>
    <experiments>3</experiments>
</comment>
<comment type="interaction">
    <interactant intactId="EBI-1307">
        <id>Q13153</id>
    </interactant>
    <interactant intactId="EBI-954089">
        <id>O15273</id>
        <label>TCAP</label>
    </interactant>
    <organismsDiffer>false</organismsDiffer>
    <experiments>3</experiments>
</comment>
<comment type="interaction">
    <interactant intactId="EBI-1307">
        <id>Q13153</id>
    </interactant>
    <interactant intactId="EBI-3923210">
        <id>Q8TDR4</id>
        <label>TCP10L</label>
    </interactant>
    <organismsDiffer>false</organismsDiffer>
    <experiments>3</experiments>
</comment>
<comment type="interaction">
    <interactant intactId="EBI-1307">
        <id>Q13153</id>
    </interactant>
    <interactant intactId="EBI-12090309">
        <id>Q9BXU0</id>
        <label>TEX12</label>
    </interactant>
    <organismsDiffer>false</organismsDiffer>
    <experiments>3</experiments>
</comment>
<comment type="interaction">
    <interactant intactId="EBI-1307">
        <id>Q13153</id>
    </interactant>
    <interactant intactId="EBI-2372529">
        <id>O60830</id>
        <label>TIMM17B</label>
    </interactant>
    <organismsDiffer>false</organismsDiffer>
    <experiments>3</experiments>
</comment>
<comment type="interaction">
    <interactant intactId="EBI-1307">
        <id>Q13153</id>
    </interactant>
    <interactant intactId="EBI-740411">
        <id>Q96A04</id>
        <label>TSACC</label>
    </interactant>
    <organismsDiffer>false</organismsDiffer>
    <experiments>3</experiments>
</comment>
<comment type="interaction">
    <interactant intactId="EBI-1307">
        <id>Q13153</id>
    </interactant>
    <interactant intactId="EBI-10274410">
        <id>Q9H892-2</id>
        <label>TTC12</label>
    </interactant>
    <organismsDiffer>false</organismsDiffer>
    <experiments>3</experiments>
</comment>
<comment type="interaction">
    <interactant intactId="EBI-1307">
        <id>Q13153</id>
    </interactant>
    <interactant intactId="EBI-25830993">
        <id>Q96EF9</id>
        <label>ZHX1-C8orf76</label>
    </interactant>
    <organismsDiffer>false</organismsDiffer>
    <experiments>3</experiments>
</comment>
<comment type="interaction">
    <interactant intactId="EBI-1307">
        <id>Q13153</id>
    </interactant>
    <interactant intactId="EBI-12010736">
        <id>Q8N0Y2-2</id>
        <label>ZNF444</label>
    </interactant>
    <organismsDiffer>false</organismsDiffer>
    <experiments>3</experiments>
</comment>
<comment type="interaction">
    <interactant intactId="EBI-1307">
        <id>Q13153</id>
    </interactant>
    <interactant intactId="EBI-36480973">
        <id>B3KX85</id>
    </interactant>
    <organismsDiffer>false</organismsDiffer>
    <experiments>6</experiments>
</comment>
<comment type="interaction">
    <interactant intactId="EBI-1307">
        <id>Q13153</id>
    </interactant>
    <interactant intactId="EBI-81763">
        <id>P60766</id>
        <label>Cdc42</label>
    </interactant>
    <organismsDiffer>true</organismsDiffer>
    <experiments>3</experiments>
</comment>
<comment type="interaction">
    <interactant intactId="EBI-1307">
        <id>Q13153</id>
    </interactant>
    <interactant intactId="EBI-413646">
        <id>P63001</id>
        <label>Rac1</label>
    </interactant>
    <organismsDiffer>true</organismsDiffer>
    <experiments>3</experiments>
</comment>
<comment type="interaction">
    <interactant intactId="EBI-1307">
        <id>Q13153</id>
    </interactant>
    <interactant intactId="EBI-15780451">
        <id>Q5PP90</id>
        <label>US3(L)</label>
    </interactant>
    <organismsDiffer>true</organismsDiffer>
    <experiments>2</experiments>
</comment>
<comment type="interaction">
    <interactant intactId="EBI-15628682">
        <id>Q13153-1</id>
    </interactant>
    <interactant intactId="EBI-15628682">
        <id>Q13153-1</id>
        <label>PAK1</label>
    </interactant>
    <organismsDiffer>false</organismsDiffer>
    <experiments>2</experiments>
</comment>
<comment type="interaction">
    <interactant intactId="EBI-15628682">
        <id>Q13153-1</id>
    </interactant>
    <interactant intactId="EBI-946095">
        <id>Q15365</id>
        <label>PCBP1</label>
    </interactant>
    <organismsDiffer>false</organismsDiffer>
    <experiments>5</experiments>
</comment>
<comment type="interaction">
    <interactant intactId="EBI-1019502">
        <id>Q13153-2</id>
    </interactant>
    <interactant intactId="EBI-1638043">
        <id>Q7L0Q8</id>
        <label>RHOU</label>
    </interactant>
    <organismsDiffer>false</organismsDiffer>
    <experiments>2</experiments>
</comment>
<comment type="subcellular location">
    <subcellularLocation>
        <location evidence="11 30 33">Cytoplasm</location>
    </subcellularLocation>
    <subcellularLocation>
        <location evidence="11 33">Cell junction</location>
        <location evidence="11 33">Focal adhesion</location>
    </subcellularLocation>
    <subcellularLocation>
        <location evidence="11">Cell projection</location>
        <location evidence="11">Lamellipodium</location>
    </subcellularLocation>
    <subcellularLocation>
        <location evidence="33">Cell membrane</location>
    </subcellularLocation>
    <subcellularLocation>
        <location evidence="33">Cell projection</location>
        <location evidence="33">Ruffle membrane</location>
    </subcellularLocation>
    <subcellularLocation>
        <location evidence="33">Cell projection</location>
        <location evidence="33">Invadopodium</location>
    </subcellularLocation>
    <subcellularLocation>
        <location evidence="30">Nucleus</location>
        <location evidence="30">Nucleoplasm</location>
    </subcellularLocation>
    <subcellularLocation>
        <location evidence="30">Chromosome</location>
    </subcellularLocation>
    <subcellularLocation>
        <location evidence="36">Cytoplasm</location>
        <location evidence="36">Cytoskeleton</location>
        <location evidence="36">Microtubule organizing center</location>
        <location evidence="36">Centrosome</location>
    </subcellularLocation>
    <text evidence="2 11 30 33 36">Colocalizes with RUFY3, F-actin and other core migration components in invadopodia at the cell periphery (PubMed:25766321). Recruited to the cell membrane by interaction with CDC42 and RAC1. Recruited to focal adhesions upon activation. Colocalized with CIB1 within membrane ruffles during cell spreading upon readhesion to fibronectin. Upon DNA damage, translocates to the nucleoplasm when phosphorylated at Thr-212 where is co-recruited with MORC2 on damaged chromatin (PubMed:23260667). Localization to the centrosome does not depend upon the presence of gamma-tubulin (PubMed:27012601). Localization of the active, but not inactive, protein to the adhesions and edge of lamellipodia is mediated by interaction with GIT1 (PubMed:11896197).</text>
</comment>
<comment type="alternative products">
    <event type="alternative splicing"/>
    <isoform>
        <id>Q13153-1</id>
        <name>1</name>
        <sequence type="displayed"/>
    </isoform>
    <isoform>
        <id>Q13153-2</id>
        <name>2</name>
        <name>PAK1B</name>
        <sequence type="described" ref="VSP_017507"/>
    </isoform>
</comment>
<comment type="tissue specificity">
    <text evidence="33">Overexpressed in gastric cancer cells and tissues (at protein level) (PubMed:25766321).</text>
</comment>
<comment type="PTM">
    <text evidence="1 7 8 14 27 28 29 30 32">Autophosphorylated in trans, meaning that in a dimer, one kinase molecule phosphorylates the other one (PubMed:20417602, PubMed:22153498, PubMed:23633677). Activated by autophosphorylation at Thr-423 in response to a conformation change, triggered by interaction with GTP-bound CDC42 or RAC1 (PubMed:10551809). Activated by phosphorylation at Thr-423 by BRSK2 and by PDPK1 (PubMed:10995762, PubMed:22669945). Phosphorylated by JAK2 in response to PRL; this increases PAK1 kinase activity. Phosphorylated at Ser-21 by PKB/AKT; this reduces interaction with NCK1 and association with focal adhesion sites (PubMed:14585966). Upon DNA damage, phosphorylated at Thr-212 and translocates to the nucleoplasm (PubMed:23260667). Phosphorylated at tyrosine residues, which can be enhanced by NTN1 (By similarity).</text>
</comment>
<comment type="disease" evidence="37">
    <disease id="DI-05360">
        <name>Intellectual developmental disorder with macrocephaly, seizures, and speech delay</name>
        <acronym>IDDMSSD</acronym>
        <description>An autosomal dominant neurodevelopmental disorder characterized by impaired intellectual development, poor speech, postnatal macrocephaly, and seizures.</description>
        <dbReference type="MIM" id="618158"/>
    </disease>
    <text>The disease is caused by variants affecting the gene represented in this entry.</text>
</comment>
<comment type="similarity">
    <text evidence="47">Belongs to the protein kinase superfamily. STE Ser/Thr protein kinase family. STE20 subfamily.</text>
</comment>
<comment type="caution">
    <text evidence="48 49">The interaction between DSCAM, PAK1 and RAC1 has beend described. This article has been withdrawn by the authors.</text>
</comment>
<comment type="caution">
    <text evidence="21 47">There are data describing interaction and regulation by the product of CRIPAK, a putative single exon gene (PubMed:16278681). However, considering all available data there is no sufficient supporting evidence for the existence of such protein.</text>
</comment>
<comment type="online information" name="Atlas of Genetics and Cytogenetics in Oncology and Haematology">
    <link uri="https://atlasgeneticsoncology.org/gene/41633/PAK1"/>
</comment>
<protein>
    <recommendedName>
        <fullName evidence="43">Serine/threonine-protein kinase PAK 1</fullName>
        <ecNumber evidence="7 22 28 39">2.7.11.1</ecNumber>
    </recommendedName>
    <alternativeName>
        <fullName evidence="45">Alpha-PAK</fullName>
    </alternativeName>
    <alternativeName>
        <fullName evidence="44">p21-activated kinase 1</fullName>
        <shortName>PAK-1</shortName>
    </alternativeName>
    <alternativeName>
        <fullName evidence="2">p65-PAK</fullName>
    </alternativeName>
</protein>
<gene>
    <name evidence="43 50" type="primary">PAK1</name>
</gene>